<sequence length="7124" mass="797625">MAKMGKYGLGFKWAPEFPWMLPNASEKLGSPERSEEDGFCPSAAQEPKTKGKTLINHVRVDCSRLPALECCVQSAIIRDIFVDEDPLNVEASTMMALQFGSAVLVKPSKRLSIQAWAKLGVLPKTPAMGLFKRFCLCNTRECVCDAHVAFQLFTVQPDGVCLGNGRFIGWFVPVTAIPAYAKQWLQPWSILLRKGGNKGSVTSGHFRRAVTMPVYDFNVEDACEEVHLNPKGKYSRKAYALLKGYRGVKSILFLDQYGCDYTGRLAKGLEDYGDCTLEEMKELFPVWCDSLDNEVVVAWHVDRDPRAVMRLQTLATIRSIGYVGQPTEDLVDGDVVVREPAHLLAANAIVKRLPRLVETMLYTDSSVTEFCYKTKLCDCGFITQFGYVDCCGDACDFRGWVPGNMMDGFLCPGCSKSYMPWELEAQSSGVIPKGGVLFTQSTDTVNRESFKLYGHAVVPFGSAVYWSPYPGMWLPVIWSSVKSYADLTYTGVVGCKAIVQETDAICRSLYMDYVQHKCGNLEQRAILGLDDVYHRQLLVNRGDYSLLLENVDLFVKRRAEFACKFATCGDGLVPLLLDGLVPRSYYLIKSGQAFTSMMVNFSHEVTDMCMDMALLFMHDVKVATKYVKKVTGKLAVRFKALGVAVVRKITEWFDLAVDTAASAAGWLCYQLVNGLFAVANGGITFLSDVPELVKNFVDKFKVFFKVLIDSMSVSVLSGLTVVKTASNRVCLAGCKVYEVVQKRLSAYVMPVGCNEATCLVGEIEPAVVEDDVVDVVKAPLTYQGCCKPPTSFEKICVVDKLYMAKCGDQFYPVVVDNDTIGVLDQCWRFPCAGKKVEFNDKPKVKEIPSTRKIKINFALDATFDSVLSKACSEFEVDKDVTLDELLDVVLDAVESTLSPCKEHDVIGTKVCALLNRLAEDYVYLFDEGGEEVIAPKMYCSFSAPDDEDCVAADVVDADENQGDDADDSAALVTDTQEEDGVAKGQVGVAESDARLDQVEAFDIEKVEDPILNELSAELNAPADKTYEDVLAFDAIYSEALSAFYAVPGDETHFKVCGFYSPAIERTNCWLRSTLIVMQSLPLEFKDLEMQKLWLSYKSSYNKEFVDKLVKSVPKSIILPQGGYVADFAYFFLSQCSFKAYANWRCLKCDMDLKLQGLDAMFFYGDVVSHVCKCGTGMTLLSADIPYTLHFGLRDDKFCAFYTPRKVFRAACVVDVNDCHSMAVVDGKQIDGKVVTKFNGDKYDFMVGHGMAFSMSAFEIAQLYGSCITPNVCFVKGDVIKVLRRVGAEVIVNPANGRMAHGAGVAGAIAKAAGKSFIKETADMVKNQGVCQVGECYESTGGNLCKTVLNIVGPDARGHGKQCYSFLERAYQHINKCDDVVTTLISAGIFSVPTDVSLTYLIGVVTKNVILVSNNKDDFDVIEKCQVTSIAGTKALSLQLAKNLCRDVKFETNACDSLFSDSCFVSSYDVLQEVELLRHDIQLDDDARVFVQAHMDNLPADWRLVNKFDSVDGVRTVKYFECPGEIFVSSQGKKFGYVQNGSFKVASVSQIRALLANKVDVLCTVDGVNFRSCCVAEGEVFGKTLGSVFCDGINVTKVRCSAIHKGKVFFQYSGLSAADLVAVTDAFGFDEPQLLKYYNMLGMCKWPVVVCGNYFAFKQSNNNCYINVACLMLQHLSLKFHKWQWQEAWNEFRSGKPLRFVSLVLAKGSFKFNEPSDSTDFMRVVLREADLSGATCDFEFVCKCGVKQEQRKGVDAVMHFGTLDKGDLAKGYTIACTCGNKLVHCTQLNVPFLICSNKPEGKKLPDDVVAANIFTGGSLGHYTHVKCKPKYQLYDACNVSKVSEAKGNFTDCLYLKNLKQTFSSKLTTFYLDDVKCVEYNPDLSQYYCESGKYYTKPIIKAQFRTFEKVEGVYTNFKLVGHSIAEKFNAKLGFDCNSPFTEYKITEWPTATGDVVLASDDLYVSRYSGGCVTFGKPVIWLGHEEASLKSLTYFNRPSVVCENKFNVLPVDVSEPTDKGPVPAAVLVTGALSGAATAPGTAKEQKVCASDSVVDQVVSGFLSDLSGATVDVKEVKLNGVKKPIKVEDSVVVNDPTSETKVVKSLSIVDVYDMFLTGCRYVVWMANELSRLVNSPTVREYVKWGMTKIVIPAKLVLLRDEKQEFVAPKVVKAKVIACYSAVKWFFLYCFSWIKFNTDNKVIYTTEVASKLTFNLCCLAFKNALQTFNWNVVSRGFFLVATVFLLWFNFLYANVILSDFYLPNIGFFPTFVGQIVAWVKTTFGIFTLCDLYQVSDVGYRSSFCNGSMVCELCFSGFDMLDNYDAINVVQHVVDRRVSFDYISLFKLVVELVIGYSLYTVCFYPLFGLIGMQLLTTWLPEFFMLETMHWSARFFVFVANMLPAFTLLRFYIVVTAMYKIFCLCRHVMYGCSRPGCLFCYKRNRSVRVKCSTVVGGTLRYYDVMANGGTGFCAKHQWNCLNCSAFGPGNTFITHEAAADLSKELKRPVNPTDSAYYLVTEVKQVGCSMRLFYERDGQRVYDDVSASLFVDMNGLLHSKVKGVPETHVVVVENEADKAGFLNAAVFYAQSLYRPMLLVEKKLITTANTGLSVSQTMFDLYVDSLLGVLDVDRKSLTSFVNAAHNSLKEGVQLEQVMDTFIGCARRKCAIDSDVETKSITKSIMSAVNAGVDFTDESCNNLVPTYVKSDTIVAADLGVLIQNNAKHVQANVAKAANVACIWSVDAFNQLSADLQHRLRKACSKTGLKIKLTYNKQEANVPILTTPFSLKGGAVFSKVLQWLFVVNLICFIVLWALMPTYAVHKSDMQLPLYASFKVIDNGVLRDVTVTDACFANKFIQFDQWYESTFGLVYYRNSRACPVVVAVIDQDIGYTLFNVPTKVLRYGFHVLHFITHAFATDSVQCYTPHMQIPYDNFYASGCVLSSLCTMLAHADGTPHPYCYTEGIMHNASLYDSLAPHVRYNLANSNGYIRFPEVVSEGIVRIVRTRSMTYCRVGLCEDAEEGVCFNFNSSWVLNNPYYRAMPGTFCGRNAFDLIHQVLGGLVRPIDFFALTASSVAGAILAIIVVLAFYYLIKLKRAFGDYTSVVVINVIVWCINFLMLFVFQVYPTLSCLYACFYFYTTLYFPSEISVVMHLQWLVMYGAIMPLWFCIIYVAVVVSNHALWLFSYCRKLGTEVRSDGTFEEMSLTTFMITKESYCKLKNSVSDVAFNRYLSLYNKYRYFSGKMDTAAYREAACSQLAKAMETFNHNNGNDVLYQPPTASVTTSFLQSGIVKMVFPTSKVEPCVVSVTYGNMTLNGLWLDDKVYCPRHVICSSADMTDPDYSNLLCRVISSDFCVMSGRMSLTVMSYQMQGSLLVLTVTLQNPNTPKYSFGVVKPGETFTVLAAYNGKSQGAFHVTMRSSYTIKGSFLCGSCGSVGYVLTGDSVRFVYMHQLELSTGCHTGTDFSGNFYGPYRDAQVVQLPVQDYTQTVNVVAWLYAAILNRCNWFVQSDSCSLEEFNVWAMTNGFSSIKADLVLDALASMTGVTVEQILAAIKRLYSGFQGKQILGSCVLEDELTPSDVYQQLAGVKLQSKRTRVVKGTCCWILASTLLFCSIISAFVKWTMFMYVTTHMLGVTLCALCFVSFAMLLVKHKHLYLTMFIMPVLCTLFYTNYLVVYKQSFRGLAYAWLSHFVPAVDYTYMDEVLYGVVLLVAMVFVTMRSINHDVFSVMFLVGRLVSLVSMWYFGANLEEEVLLFLTSLFGTYTWTTMLSLATAKVIAKWLAVNVLYFTDVPQVKLVLLSYLCIGYVCCCYWGVLSLLNSIFRMPLGVYNYKISVQELRYMNANGLRPPRNSFEALVLNFKLLGIGGVPVIEVSQIQSRLTDVKCVNVVLLNCLQHLHIASSSKLWQYCSTLHNEILATSDLSVAFDKLAQLLVVLFANPAAVDSKCLASIEEVSDDYVRDSTVLQALQSEFVNMASFVEYELAKKNLDEAKASGSANQQQIKQLEKACNIAKSAYERDRAVARKLERMADLALTNMYKEARINDKKSKVVSALQTMLFSMIRKLDNQALNSILDNAVKGCVPLNAIPSLTSNTLTIIVPDKQVFDQVVDNVYVTYAGNVWHIQSIQDADGAVKQLNEIDVNITWPLVIAANRHNEVSSVVLQNNELMPQKLRTQVVNSGSDMNCNTPTQCYYNTTGMGKIVYAILSDCDGLKYTKIVKEDGNCVVLELDPPCKFSVQDVKGLKIKYLYFVKGCNTLARGWVVGTLSSTVRLQAGTATEYASNSAIRSLCAFSVDPKKTYLDYIQQGGAPVTNCVKMLCDHAGTGMAITIKPEATTNQDSYGGASVCIYCRSRVEHPDVDGLCKLRGKFVQVPLGIKDPVSYVLTHDVCQVCGFWRDGSCSCVGTGSQFQSKDTNFLNRVRGTSVNARLVPCASGLDTDVQLRAFDICNANRAGIGLYYKVNCCRFQRADEDGNTLDKFFVIKRTNLEVYNKEKECYELTKECGVVAEHEFFTFDVEGSRVPHIVRKDLSKYTMLDLCYALRHFDRNDCSTLKEILLTYAECDESYFQKKDWYDFVENSDIINVYKKLGPIFNRALLNTAKFADTLVEAGLVGVLTLDNQDLYGQWYDFGDFVKTVPGCGVAVADSYYSYMMPMLTMCHALDSELFINGTYREFDLVQYDFTDFKLELFNKYFKYWSMTYHPNTCECEDDRCIIHCANFNILFSMVLPKTCFGPLVRQIFVDGVPFVVSIGYHYKELGVVMNMDVDTHRYRLSLKDLLLYAADPALHVASASALLDLRTCCFSVAAITSGVKFQTVKPGNFNQDFYEFILSKGLLKEGSSVDLKHFFFTQDGNAAITDYNYYKYNLPTMVDIKQLLFVLEVVNKYFEIYDGGCIPATQVIVNNYDKSAGYPFNKFGKARLYYEALSFEEQDEVYAYTKRNVLPTLTQMNLKYAISAKNRARTVAGVSILSTMTGRMFHQKCLKSIAATRGVPVVIGTTKFYGGWDDMLRRLIKDVDSPVLMGWDYPKCDRAMPNILRIISSLVLARKHDSCCSHTDRFYRLANECAQVLSEIVMCGGCYYVKPGGTSSGDATTAFANSVFNICQAVSANVCSLMACNGHKIEDLSIRELQKRLYSNVYRADHVDPAFVNEYYEFLNKHFSMMILSDDGVVCYNSEFASKGYIANISAFQQVLYYQNNVFMSEAKCWVETDIEKGPHEFCSQHTMLVKMDGDEVYLPYPDPSRILGAGCFVDDLLKTDSVLLIERFVSLAIDAYPLVYHENPEYQNVFRVYLEYIKKLYNDLGNQILDSYSVILSTCDGQKFTDETFYKNMYLRSAVMQSVGACVVCSSQTSLRCGSCIRKPLLCCKCAYDHVMSTDHKYVLSVSPYVCNSPGCDVNDVTKLYLGGMSYYCEDHKPQYSFKLVMNGMVFGLYKQSCTGSPYIEDFNKIASCKWTEVDDYVLANECTERLKLFAAETQKATEESFKQCYASATIREIVSDRELILSWEIGKVRPPLNKNYVFTGYHFTSNGKTVLGEYVFDKSELTNGVYYRATTTYKLSVGDVFILTSHAVSSLSAPTLVPQENYTSIRFASVYSVPETFQNNVPNYQHIGMKRYCTVQGPPGTGKSHLAIGLAVYYCTARVVYTAASHAAVDALCEKAYKFLNINDCTRIVPAKVRVDCYDKFKVNDTTRKYVFTTINALPELVTDIIVVDEVSMLTNYELSVINSRVRAKHYVYIGDPAQLPAPRVLLNKGTLEPRYFNSVTKLMCCLGPDIFLGTCYRCPKEIVDTVSALVYHNKLKAKNDNSSMCFKVYYKGQTTHESSSAVNMQQIYLISKFLKANPSWSNAVFISPYNSQNYVAKRVLGLQTQTVDSAQGSEYDFVIYSQTAETAHSVNVNRFNVAITRAKKGILCVMSSMQLFESLNFSTLTLDKINNPRLQCTTNLFKDCSRSYAGYHPAHAPSFLAVDDKYKVGGDLAVCLNVADSAVTYSRLISLMGFKLDLTLDGYCKLFITRDEAIRRVRAWVGFDAEGAHATRDSIGTNFPLQLGFSTGIDFVVEATGMFAERDGYVFKKAVARAPPGEQFKHLVPLMSRGQKWDVVRIRIVQMLSDHLVDLADSVVLVTWAASFELTCLRYFAKVGKEVVCSVCNKRATCFNSRTGYYGCWRHSYSCDYLYNPLIVDIQQWGYTGSLTSNHDLICSVHKGAHVASSDAIMTRCLAVHDCFCKSVNWSLEYPIISNEVSVNTSCRLLQRVMFRAAMLCNRYDVCYDIGNPKGLACVKGYDFKFYDASPVVKSVKQFVYKYEAHKDQFLDGLCMFWNCNVDKYPANAVVCRFDTRVLNKLNLPGCNGGSLYVNKHAFHTSPFTRAAFENLKPMPFFYYSDTPCVYMEGMESKQVDYVPLRSATCITRCNLGGAVCLKHAEDYREYLESYNTATTAGFTFWVYKTFDFYNLWNTFTRLQSLENVVYNLVNAGHFDGRAGELPCAVIGEKVIAKIQNEDVVVFKNNTPFPTNVAVELFAKRSIRPHPELKLFRNLNIDVCWSHVLWDYAKDSVFCSSTYKVCKYTDLQCIESLNVLFDGRDNGALEAFKKCRDGVYINTTKIKSLSMIKGPQRADLNGVVVEKVGDSDVEFWFAMRRDGDDVIFSRTGSLEPSHYRSPQGNPGGNRVGDLSGNEALARGTIFTQSRFLSSFAPRSEMEKDFMDLDEDVFIAKYSLQDYAFEHVVYGSFNQKIIGGLHLLIGLARRQQKSNLVIQEFVPYDSSIHSYFITDENSGSSKSVCTVIDLLLDDFVDIVKSLNLNCVSKVVNVNVDFKDFQFMLWCNEEKVMTFYPRLQAAADWKPGYVMPVLYKYLESPLERVNLWNYGKPITLPTGCLMNVAKYTQLCQYLNTTTLAVPANMRVLHLGAGSDKDVAPGSAVLRQWLPAGSILVDNDINPFVSDSVASYYGNCITLPIACQWDLIISDMYDPLTKNIGEYNVSKDGFFTYLCHLIRDKLALGGSVAIKITEFSWNAELYSLMGKFAFWTIFCTNVNASSSEGFLIGINWLNRTRTEIDGKTMHANYLFWRNSTMWNGGAYSLFDMSKFPLKVAGTAVVSLKPDQINDLVLSLIEKGKLLVRDTRKEVFVGDSLVNVK</sequence>
<reference key="1">
    <citation type="submission" date="1999-11" db="EMBL/GenBank/DDBJ databases">
        <title>Pathogenesis and sequence analysis of mouse hepatitis virus type 2: an experimental model system of acute meningitis and hepatitis in mice.</title>
        <authorList>
            <person name="Das Sarma J."/>
            <person name="Hingley S.T."/>
            <person name="Lai M.M.C."/>
            <person name="Weiss S.R."/>
            <person name="Lavi E."/>
        </authorList>
    </citation>
    <scope>NUCLEOTIDE SEQUENCE [GENOMIC RNA]</scope>
</reference>
<reference key="2">
    <citation type="journal article" date="1994" name="Virology">
        <title>Mouse hepatitis virus strain A59 RNA polymerase gene ORF 1a: heterogeneity among MHV strains.</title>
        <authorList>
            <person name="Bonilla P.J."/>
            <person name="Gorbalenya A.E."/>
            <person name="Weiss S.R."/>
        </authorList>
    </citation>
    <scope>PARTIAL NUCLEOTIDE SEQUENCE [GENOMIC RNA]</scope>
</reference>
<protein>
    <recommendedName>
        <fullName>Replicase polyprotein 1ab</fullName>
        <shortName>pp1ab</shortName>
    </recommendedName>
    <alternativeName>
        <fullName>ORF1ab polyprotein</fullName>
    </alternativeName>
    <component>
        <recommendedName>
            <fullName>Host translation inhibitor nsp1</fullName>
            <shortName>nsp1</shortName>
        </recommendedName>
        <alternativeName>
            <fullName>p28</fullName>
        </alternativeName>
    </component>
    <component>
        <recommendedName>
            <fullName>Non-structural protein 2</fullName>
            <shortName>nsp2</shortName>
        </recommendedName>
        <alternativeName>
            <fullName>p65</fullName>
        </alternativeName>
    </component>
    <component>
        <recommendedName>
            <fullName>Papain-like proteinase nsp3</fullName>
            <shortName>PL-PRO</shortName>
            <ecNumber>3.4.19.12</ecNumber>
            <ecNumber>3.4.22.-</ecNumber>
        </recommendedName>
        <alternativeName>
            <fullName>Non-structural protein 3</fullName>
            <shortName>nsp3</shortName>
        </alternativeName>
        <alternativeName>
            <fullName>p210</fullName>
        </alternativeName>
    </component>
    <component>
        <recommendedName>
            <fullName>Non-structural protein 4</fullName>
            <shortName>nsp4</shortName>
        </recommendedName>
        <alternativeName>
            <fullName>Peptide HD2</fullName>
        </alternativeName>
        <alternativeName>
            <fullName>p44</fullName>
        </alternativeName>
    </component>
    <component>
        <recommendedName>
            <fullName>3C-like proteinase nsp5</fullName>
            <shortName>3CL-PRO</shortName>
            <shortName>3CLp</shortName>
            <ecNumber>3.4.22.-</ecNumber>
        </recommendedName>
        <alternativeName>
            <fullName>M-PRO</fullName>
        </alternativeName>
        <alternativeName>
            <fullName>nsp5</fullName>
        </alternativeName>
        <alternativeName>
            <fullName>p27</fullName>
        </alternativeName>
    </component>
    <component>
        <recommendedName>
            <fullName>Non-structural protein 6</fullName>
            <shortName>nsp6</shortName>
        </recommendedName>
    </component>
    <component>
        <recommendedName>
            <fullName>Non-structural protein 7</fullName>
            <shortName>nsp7</shortName>
        </recommendedName>
        <alternativeName>
            <fullName>p10</fullName>
        </alternativeName>
    </component>
    <component>
        <recommendedName>
            <fullName>Non-structural protein 8</fullName>
            <shortName>nsp8</shortName>
        </recommendedName>
        <alternativeName>
            <fullName>p22</fullName>
        </alternativeName>
    </component>
    <component>
        <recommendedName>
            <fullName>Viral protein genome-linked nsp9</fullName>
        </recommendedName>
        <alternativeName>
            <fullName>Non-structural protein 9</fullName>
            <shortName>nsp9</shortName>
        </alternativeName>
        <alternativeName>
            <fullName>RNA-capping enzyme subunit nsp9</fullName>
        </alternativeName>
        <alternativeName>
            <fullName>p12</fullName>
        </alternativeName>
    </component>
    <component>
        <recommendedName>
            <fullName>Non-structural protein 10</fullName>
            <shortName>nsp10</shortName>
        </recommendedName>
        <alternativeName>
            <fullName>Growth factor-like peptide</fullName>
            <shortName>GFL</shortName>
        </alternativeName>
        <alternativeName>
            <fullName>p15</fullName>
        </alternativeName>
    </component>
    <component>
        <recommendedName>
            <fullName>RNA-directed RNA polymerase nsp12</fullName>
            <shortName>Pol</shortName>
            <shortName>RdRp</shortName>
            <ecNumber>2.7.7.48</ecNumber>
            <ecNumber>2.7.7.50</ecNumber>
        </recommendedName>
        <alternativeName>
            <fullName>nsp12</fullName>
        </alternativeName>
        <alternativeName>
            <fullName>p100</fullName>
        </alternativeName>
    </component>
    <component>
        <recommendedName>
            <fullName>Helicase nsp13</fullName>
            <shortName>Hel</shortName>
            <ecNumber>3.6.4.12</ecNumber>
            <ecNumber>3.6.4.13</ecNumber>
        </recommendedName>
        <alternativeName>
            <fullName>nsp13</fullName>
        </alternativeName>
        <alternativeName>
            <fullName>p67</fullName>
        </alternativeName>
    </component>
    <component>
        <recommendedName>
            <fullName>Guanine-N7 methyltransferase nsp14</fullName>
            <shortName>ExoN</shortName>
            <ecNumber>2.1.1.56</ecNumber>
            <ecNumber>3.1.13.-</ecNumber>
        </recommendedName>
        <alternativeName>
            <fullName>nsp14</fullName>
        </alternativeName>
    </component>
    <component>
        <recommendedName>
            <fullName>Uridylate-specific endoribonuclease nsp15</fullName>
            <ecNumber>4.6.1.-</ecNumber>
        </recommendedName>
        <alternativeName>
            <fullName>NendoU</fullName>
        </alternativeName>
        <alternativeName>
            <fullName>nsp15</fullName>
        </alternativeName>
        <alternativeName>
            <fullName>p35</fullName>
        </alternativeName>
    </component>
    <component>
        <recommendedName>
            <fullName>2'-O-methyltransferase nsp16</fullName>
            <ecNumber>2.1.1.57</ecNumber>
        </recommendedName>
        <alternativeName>
            <fullName>nsp16</fullName>
        </alternativeName>
    </component>
</protein>
<organism>
    <name type="scientific">Murine coronavirus (strain 2)</name>
    <name type="common">MHV-2</name>
    <name type="synonym">Murine hepatitis virus</name>
    <dbReference type="NCBI Taxonomy" id="76344"/>
    <lineage>
        <taxon>Viruses</taxon>
        <taxon>Riboviria</taxon>
        <taxon>Orthornavirae</taxon>
        <taxon>Pisuviricota</taxon>
        <taxon>Pisoniviricetes</taxon>
        <taxon>Nidovirales</taxon>
        <taxon>Cornidovirineae</taxon>
        <taxon>Coronaviridae</taxon>
        <taxon>Orthocoronavirinae</taxon>
        <taxon>Betacoronavirus</taxon>
        <taxon>Embecovirus</taxon>
        <taxon>Murine coronavirus</taxon>
    </lineage>
</organism>
<accession>P0C6X8</accession>
<accession>Q9PYA2</accession>
<accession>Q9PYA3</accession>
<dbReference type="EC" id="3.4.19.12"/>
<dbReference type="EC" id="3.4.22.-"/>
<dbReference type="EC" id="2.7.7.48"/>
<dbReference type="EC" id="2.7.7.50"/>
<dbReference type="EC" id="3.6.4.12"/>
<dbReference type="EC" id="3.6.4.13"/>
<dbReference type="EC" id="2.1.1.56"/>
<dbReference type="EC" id="3.1.13.-"/>
<dbReference type="EC" id="4.6.1.-"/>
<dbReference type="EC" id="2.1.1.57"/>
<dbReference type="EMBL" id="AF201929">
    <property type="protein sequence ID" value="AAF19383.1"/>
    <property type="status" value="ALT_SEQ"/>
    <property type="molecule type" value="Genomic_RNA"/>
</dbReference>
<dbReference type="EMBL" id="AF201929">
    <property type="protein sequence ID" value="AAF19384.1"/>
    <property type="status" value="ALT_SEQ"/>
    <property type="molecule type" value="Genomic_RNA"/>
</dbReference>
<dbReference type="SMR" id="P0C6X8"/>
<dbReference type="Proteomes" id="UP000139707">
    <property type="component" value="Genome"/>
</dbReference>
<dbReference type="GO" id="GO:0044172">
    <property type="term" value="C:host cell endoplasmic reticulum-Golgi intermediate compartment"/>
    <property type="evidence" value="ECO:0007669"/>
    <property type="project" value="UniProtKB-SubCell"/>
</dbReference>
<dbReference type="GO" id="GO:0033644">
    <property type="term" value="C:host cell membrane"/>
    <property type="evidence" value="ECO:0007669"/>
    <property type="project" value="UniProtKB-SubCell"/>
</dbReference>
<dbReference type="GO" id="GO:0044220">
    <property type="term" value="C:host cell perinuclear region of cytoplasm"/>
    <property type="evidence" value="ECO:0007669"/>
    <property type="project" value="UniProtKB-SubCell"/>
</dbReference>
<dbReference type="GO" id="GO:0016020">
    <property type="term" value="C:membrane"/>
    <property type="evidence" value="ECO:0007669"/>
    <property type="project" value="UniProtKB-KW"/>
</dbReference>
<dbReference type="GO" id="GO:0000175">
    <property type="term" value="F:3'-5'-RNA exonuclease activity"/>
    <property type="evidence" value="ECO:0007669"/>
    <property type="project" value="InterPro"/>
</dbReference>
<dbReference type="GO" id="GO:0043139">
    <property type="term" value="F:5'-3' DNA helicase activity"/>
    <property type="evidence" value="ECO:0007669"/>
    <property type="project" value="TreeGrafter"/>
</dbReference>
<dbReference type="GO" id="GO:0005524">
    <property type="term" value="F:ATP binding"/>
    <property type="evidence" value="ECO:0007669"/>
    <property type="project" value="UniProtKB-KW"/>
</dbReference>
<dbReference type="GO" id="GO:0016887">
    <property type="term" value="F:ATP hydrolysis activity"/>
    <property type="evidence" value="ECO:0007669"/>
    <property type="project" value="RHEA"/>
</dbReference>
<dbReference type="GO" id="GO:0004843">
    <property type="term" value="F:cysteine-type deubiquitinase activity"/>
    <property type="evidence" value="ECO:0007669"/>
    <property type="project" value="UniProtKB-EC"/>
</dbReference>
<dbReference type="GO" id="GO:0004197">
    <property type="term" value="F:cysteine-type endopeptidase activity"/>
    <property type="evidence" value="ECO:0007669"/>
    <property type="project" value="InterPro"/>
</dbReference>
<dbReference type="GO" id="GO:0004519">
    <property type="term" value="F:endonuclease activity"/>
    <property type="evidence" value="ECO:0007669"/>
    <property type="project" value="UniProtKB-KW"/>
</dbReference>
<dbReference type="GO" id="GO:0016829">
    <property type="term" value="F:lyase activity"/>
    <property type="evidence" value="ECO:0007669"/>
    <property type="project" value="UniProtKB-KW"/>
</dbReference>
<dbReference type="GO" id="GO:0004483">
    <property type="term" value="F:mRNA (nucleoside-2'-O-)-methyltransferase activity"/>
    <property type="evidence" value="ECO:0007669"/>
    <property type="project" value="InterPro"/>
</dbReference>
<dbReference type="GO" id="GO:0004482">
    <property type="term" value="F:mRNA 5'-cap (guanine-N7-)-methyltransferase activity"/>
    <property type="evidence" value="ECO:0007669"/>
    <property type="project" value="InterPro"/>
</dbReference>
<dbReference type="GO" id="GO:0008242">
    <property type="term" value="F:omega peptidase activity"/>
    <property type="evidence" value="ECO:0007669"/>
    <property type="project" value="InterPro"/>
</dbReference>
<dbReference type="GO" id="GO:0003724">
    <property type="term" value="F:RNA helicase activity"/>
    <property type="evidence" value="ECO:0007669"/>
    <property type="project" value="UniProtKB-EC"/>
</dbReference>
<dbReference type="GO" id="GO:0003968">
    <property type="term" value="F:RNA-directed RNA polymerase activity"/>
    <property type="evidence" value="ECO:0007669"/>
    <property type="project" value="UniProtKB-KW"/>
</dbReference>
<dbReference type="GO" id="GO:0003727">
    <property type="term" value="F:single-stranded RNA binding"/>
    <property type="evidence" value="ECO:0007669"/>
    <property type="project" value="InterPro"/>
</dbReference>
<dbReference type="GO" id="GO:0008270">
    <property type="term" value="F:zinc ion binding"/>
    <property type="evidence" value="ECO:0007669"/>
    <property type="project" value="UniProtKB-KW"/>
</dbReference>
<dbReference type="GO" id="GO:0006351">
    <property type="term" value="P:DNA-templated transcription"/>
    <property type="evidence" value="ECO:0007669"/>
    <property type="project" value="InterPro"/>
</dbReference>
<dbReference type="GO" id="GO:0006508">
    <property type="term" value="P:proteolysis"/>
    <property type="evidence" value="ECO:0007669"/>
    <property type="project" value="UniProtKB-KW"/>
</dbReference>
<dbReference type="GO" id="GO:0010506">
    <property type="term" value="P:regulation of autophagy"/>
    <property type="evidence" value="ECO:0007669"/>
    <property type="project" value="InterPro"/>
</dbReference>
<dbReference type="GO" id="GO:0039520">
    <property type="term" value="P:symbiont-mediated activation of host autophagy"/>
    <property type="evidence" value="ECO:0007669"/>
    <property type="project" value="UniProtKB-KW"/>
</dbReference>
<dbReference type="GO" id="GO:0039595">
    <property type="term" value="P:symbiont-mediated degradation of host mRNA"/>
    <property type="evidence" value="ECO:0007669"/>
    <property type="project" value="UniProtKB-KW"/>
</dbReference>
<dbReference type="GO" id="GO:0039648">
    <property type="term" value="P:symbiont-mediated perturbation of host ubiquitin-like protein modification"/>
    <property type="evidence" value="ECO:0007669"/>
    <property type="project" value="UniProtKB-KW"/>
</dbReference>
<dbReference type="GO" id="GO:0039657">
    <property type="term" value="P:symbiont-mediated suppression of host gene expression"/>
    <property type="evidence" value="ECO:0007669"/>
    <property type="project" value="UniProtKB-KW"/>
</dbReference>
<dbReference type="GO" id="GO:0039579">
    <property type="term" value="P:symbiont-mediated suppression of host ISG15-protein conjugation"/>
    <property type="evidence" value="ECO:0007669"/>
    <property type="project" value="UniProtKB-KW"/>
</dbReference>
<dbReference type="GO" id="GO:0085034">
    <property type="term" value="P:symbiont-mediated suppression of host NF-kappaB cascade"/>
    <property type="evidence" value="ECO:0007669"/>
    <property type="project" value="UniProtKB-KW"/>
</dbReference>
<dbReference type="GO" id="GO:0039502">
    <property type="term" value="P:symbiont-mediated suppression of host type I interferon-mediated signaling pathway"/>
    <property type="evidence" value="ECO:0007669"/>
    <property type="project" value="UniProtKB-KW"/>
</dbReference>
<dbReference type="GO" id="GO:0019082">
    <property type="term" value="P:viral protein processing"/>
    <property type="evidence" value="ECO:0007669"/>
    <property type="project" value="InterPro"/>
</dbReference>
<dbReference type="GO" id="GO:0039694">
    <property type="term" value="P:viral RNA genome replication"/>
    <property type="evidence" value="ECO:0007669"/>
    <property type="project" value="InterPro"/>
</dbReference>
<dbReference type="GO" id="GO:0075523">
    <property type="term" value="P:viral translational frameshifting"/>
    <property type="evidence" value="ECO:0007669"/>
    <property type="project" value="UniProtKB-KW"/>
</dbReference>
<dbReference type="CDD" id="cd21409">
    <property type="entry name" value="1B_cv_Nsp13-like"/>
    <property type="match status" value="1"/>
</dbReference>
<dbReference type="CDD" id="cd21901">
    <property type="entry name" value="alpha_betaCoV_Nsp10"/>
    <property type="match status" value="1"/>
</dbReference>
<dbReference type="CDD" id="cd21560">
    <property type="entry name" value="betaCoV-Nsp6"/>
    <property type="match status" value="1"/>
</dbReference>
<dbReference type="CDD" id="cd21722">
    <property type="entry name" value="betaCoV_Nsp13-helicase"/>
    <property type="match status" value="1"/>
</dbReference>
<dbReference type="CDD" id="cd21659">
    <property type="entry name" value="betaCoV_Nsp14"/>
    <property type="match status" value="1"/>
</dbReference>
<dbReference type="CDD" id="cd21519">
    <property type="entry name" value="betaCoV_Nsp2_MHV-like"/>
    <property type="match status" value="1"/>
</dbReference>
<dbReference type="CDD" id="cd21666">
    <property type="entry name" value="betaCoV_Nsp5_Mpro"/>
    <property type="match status" value="1"/>
</dbReference>
<dbReference type="CDD" id="cd21827">
    <property type="entry name" value="betaCoV_Nsp7"/>
    <property type="match status" value="1"/>
</dbReference>
<dbReference type="CDD" id="cd21831">
    <property type="entry name" value="betaCoV_Nsp8"/>
    <property type="match status" value="1"/>
</dbReference>
<dbReference type="CDD" id="cd21898">
    <property type="entry name" value="betaCoV_Nsp9"/>
    <property type="match status" value="1"/>
</dbReference>
<dbReference type="CDD" id="cd21732">
    <property type="entry name" value="betaCoV_PLPro"/>
    <property type="match status" value="1"/>
</dbReference>
<dbReference type="CDD" id="cd23528">
    <property type="entry name" value="capping_2-OMTase_betaCoV_Nsp16"/>
    <property type="match status" value="1"/>
</dbReference>
<dbReference type="CDD" id="cd21473">
    <property type="entry name" value="cv_Nsp4_TM"/>
    <property type="match status" value="1"/>
</dbReference>
<dbReference type="CDD" id="cd21524">
    <property type="entry name" value="DPUP_MHV_Nsp3"/>
    <property type="match status" value="1"/>
</dbReference>
<dbReference type="CDD" id="cd21593">
    <property type="entry name" value="HCoV_HKU1-like_RdRp"/>
    <property type="match status" value="1"/>
</dbReference>
<dbReference type="CDD" id="cd21167">
    <property type="entry name" value="M_alpha_beta_cv_Nsp15-like"/>
    <property type="match status" value="1"/>
</dbReference>
<dbReference type="CDD" id="cd21879">
    <property type="entry name" value="MHV-like_Nsp1"/>
    <property type="match status" value="1"/>
</dbReference>
<dbReference type="CDD" id="cd21812">
    <property type="entry name" value="MHV-like_Nsp3_betaSM"/>
    <property type="match status" value="1"/>
</dbReference>
<dbReference type="CDD" id="cd21824">
    <property type="entry name" value="MHV-like_Nsp3_NAB"/>
    <property type="match status" value="1"/>
</dbReference>
<dbReference type="CDD" id="cd21161">
    <property type="entry name" value="NendoU_cv_Nsp15-like"/>
    <property type="match status" value="1"/>
</dbReference>
<dbReference type="CDD" id="cd21171">
    <property type="entry name" value="NTD_alpha_betaCoV_Nsp15-like"/>
    <property type="match status" value="1"/>
</dbReference>
<dbReference type="CDD" id="cd21689">
    <property type="entry name" value="stalk_CoV_Nsp13-like"/>
    <property type="match status" value="1"/>
</dbReference>
<dbReference type="CDD" id="cd21714">
    <property type="entry name" value="TM_Y_MHV-like_Nsp3_C"/>
    <property type="match status" value="1"/>
</dbReference>
<dbReference type="CDD" id="cd21467">
    <property type="entry name" value="Ubl1_cv_Nsp3_N-like"/>
    <property type="match status" value="1"/>
</dbReference>
<dbReference type="CDD" id="cd21401">
    <property type="entry name" value="ZBD_cv_Nsp13-like"/>
    <property type="match status" value="1"/>
</dbReference>
<dbReference type="FunFam" id="3.40.50.150:FF:000162">
    <property type="entry name" value="Orf1ab polyprotein"/>
    <property type="match status" value="1"/>
</dbReference>
<dbReference type="FunFam" id="3.40.50.300:FF:001105">
    <property type="entry name" value="Orf1ab polyprotein"/>
    <property type="match status" value="1"/>
</dbReference>
<dbReference type="FunFam" id="1.10.150.420:FF:000001">
    <property type="entry name" value="Replicase polyprotein"/>
    <property type="match status" value="1"/>
</dbReference>
<dbReference type="FunFam" id="2.40.10.10:FF:000045">
    <property type="entry name" value="Replicase polyprotein 1a"/>
    <property type="match status" value="1"/>
</dbReference>
<dbReference type="FunFam" id="2.40.10.250:FF:000002">
    <property type="entry name" value="Replicase polyprotein 1a"/>
    <property type="match status" value="1"/>
</dbReference>
<dbReference type="FunFam" id="3.40.50.11580:FF:000002">
    <property type="entry name" value="Replicase polyprotein 1ab"/>
    <property type="match status" value="1"/>
</dbReference>
<dbReference type="Gene3D" id="1.10.8.1190">
    <property type="match status" value="2"/>
</dbReference>
<dbReference type="Gene3D" id="2.60.120.1680">
    <property type="match status" value="1"/>
</dbReference>
<dbReference type="Gene3D" id="3.10.20.350">
    <property type="match status" value="1"/>
</dbReference>
<dbReference type="Gene3D" id="3.10.20.540">
    <property type="match status" value="1"/>
</dbReference>
<dbReference type="Gene3D" id="3.40.50.11580">
    <property type="match status" value="1"/>
</dbReference>
<dbReference type="Gene3D" id="6.10.140.2090">
    <property type="match status" value="1"/>
</dbReference>
<dbReference type="Gene3D" id="1.10.150.420">
    <property type="entry name" value="Coronavirus nonstructural protein 4 C-terminus"/>
    <property type="match status" value="1"/>
</dbReference>
<dbReference type="Gene3D" id="3.40.220.10">
    <property type="entry name" value="Leucine Aminopeptidase, subunit E, domain 1"/>
    <property type="match status" value="1"/>
</dbReference>
<dbReference type="Gene3D" id="1.10.1840.10">
    <property type="entry name" value="main proteinase (3clpro) structure, domain 3"/>
    <property type="match status" value="1"/>
</dbReference>
<dbReference type="Gene3D" id="3.30.160.820">
    <property type="entry name" value="Nsp15 N-terminal domain-like"/>
    <property type="match status" value="1"/>
</dbReference>
<dbReference type="Gene3D" id="1.10.8.370">
    <property type="entry name" value="nsp7 replicase"/>
    <property type="match status" value="1"/>
</dbReference>
<dbReference type="Gene3D" id="3.30.70.3540">
    <property type="entry name" value="Nsp8 replicase, head domain"/>
    <property type="match status" value="1"/>
</dbReference>
<dbReference type="Gene3D" id="3.40.50.300">
    <property type="entry name" value="P-loop containing nucleotide triphosphate hydrolases"/>
    <property type="match status" value="2"/>
</dbReference>
<dbReference type="Gene3D" id="2.40.10.250">
    <property type="entry name" value="Replicase NSP9"/>
    <property type="match status" value="1"/>
</dbReference>
<dbReference type="Gene3D" id="3.40.50.11020">
    <property type="entry name" value="Replicase polyprotein, nucleic acid-binding domain"/>
    <property type="match status" value="1"/>
</dbReference>
<dbReference type="Gene3D" id="2.40.10.10">
    <property type="entry name" value="Trypsin-like serine proteases"/>
    <property type="match status" value="2"/>
</dbReference>
<dbReference type="Gene3D" id="3.40.50.150">
    <property type="entry name" value="Vaccinia Virus protein VP39"/>
    <property type="match status" value="1"/>
</dbReference>
<dbReference type="InterPro" id="IPR027351">
    <property type="entry name" value="(+)RNA_virus_helicase_core_dom"/>
</dbReference>
<dbReference type="InterPro" id="IPR046443">
    <property type="entry name" value="a/bCoV_NSP1_glob"/>
</dbReference>
<dbReference type="InterPro" id="IPR046440">
    <property type="entry name" value="AV_NSP11N_COV_NSP15M"/>
</dbReference>
<dbReference type="InterPro" id="IPR022570">
    <property type="entry name" value="B-CoV_A_NSP1"/>
</dbReference>
<dbReference type="InterPro" id="IPR046442">
    <property type="entry name" value="bCoV_NSP1_C"/>
</dbReference>
<dbReference type="InterPro" id="IPR050534">
    <property type="entry name" value="Coronavir_polyprotein_1ab"/>
</dbReference>
<dbReference type="InterPro" id="IPR043608">
    <property type="entry name" value="CoV_NSP15_M"/>
</dbReference>
<dbReference type="InterPro" id="IPR043606">
    <property type="entry name" value="CoV_NSP15_N"/>
</dbReference>
<dbReference type="InterPro" id="IPR043613">
    <property type="entry name" value="CoV_NSP2_C"/>
</dbReference>
<dbReference type="InterPro" id="IPR047573">
    <property type="entry name" value="CoV_NSP2_M"/>
</dbReference>
<dbReference type="InterPro" id="IPR049894">
    <property type="entry name" value="COV_NSP3_3ECTO"/>
</dbReference>
<dbReference type="InterPro" id="IPR043611">
    <property type="entry name" value="CoV_NSP3_C"/>
</dbReference>
<dbReference type="InterPro" id="IPR047566">
    <property type="entry name" value="CoV_NSP3_Y"/>
</dbReference>
<dbReference type="InterPro" id="IPR032505">
    <property type="entry name" value="CoV_NSP4_C"/>
</dbReference>
<dbReference type="InterPro" id="IPR043612">
    <property type="entry name" value="CoV_NSP4_N"/>
</dbReference>
<dbReference type="InterPro" id="IPR043502">
    <property type="entry name" value="DNA/RNA_pol_sf"/>
</dbReference>
<dbReference type="InterPro" id="IPR041679">
    <property type="entry name" value="DNA2/NAM7-like_C"/>
</dbReference>
<dbReference type="InterPro" id="IPR022733">
    <property type="entry name" value="DPUP_SUD_C_bCoV"/>
</dbReference>
<dbReference type="InterPro" id="IPR037227">
    <property type="entry name" value="EndoU-like"/>
</dbReference>
<dbReference type="InterPro" id="IPR002589">
    <property type="entry name" value="Macro_dom"/>
</dbReference>
<dbReference type="InterPro" id="IPR043472">
    <property type="entry name" value="Macro_dom-like"/>
</dbReference>
<dbReference type="InterPro" id="IPR046435">
    <property type="entry name" value="N7_MTase_CoV"/>
</dbReference>
<dbReference type="InterPro" id="IPR043609">
    <property type="entry name" value="NendoU_nidovirus"/>
</dbReference>
<dbReference type="InterPro" id="IPR044863">
    <property type="entry name" value="NIRAN"/>
</dbReference>
<dbReference type="InterPro" id="IPR046438">
    <property type="entry name" value="NIV_2_O_MTASE"/>
</dbReference>
<dbReference type="InterPro" id="IPR046436">
    <property type="entry name" value="NIV_EXON"/>
</dbReference>
<dbReference type="InterPro" id="IPR036333">
    <property type="entry name" value="NSP10_sf_CoV"/>
</dbReference>
<dbReference type="InterPro" id="IPR047570">
    <property type="entry name" value="NSP12_IF_CoV"/>
</dbReference>
<dbReference type="InterPro" id="IPR044343">
    <property type="entry name" value="NSP13_1B_dom_CoV"/>
</dbReference>
<dbReference type="InterPro" id="IPR048673">
    <property type="entry name" value="NSP13_stalk_CoV"/>
</dbReference>
<dbReference type="InterPro" id="IPR048672">
    <property type="entry name" value="NSP13_ZBD_CoV"/>
</dbReference>
<dbReference type="InterPro" id="IPR027352">
    <property type="entry name" value="NSP13_ZBD_CoV-like"/>
</dbReference>
<dbReference type="InterPro" id="IPR044315">
    <property type="entry name" value="NSP14_betaCoV"/>
</dbReference>
<dbReference type="InterPro" id="IPR009466">
    <property type="entry name" value="NSP14_CoV"/>
</dbReference>
<dbReference type="InterPro" id="IPR044330">
    <property type="entry name" value="NSP15_alpha_betaCoV_N"/>
</dbReference>
<dbReference type="InterPro" id="IPR044322">
    <property type="entry name" value="NSP15_M_alpha_beta_CoV"/>
</dbReference>
<dbReference type="InterPro" id="IPR043174">
    <property type="entry name" value="NSP15_middle_sf"/>
</dbReference>
<dbReference type="InterPro" id="IPR042515">
    <property type="entry name" value="NSP15_N_CoV"/>
</dbReference>
<dbReference type="InterPro" id="IPR044401">
    <property type="entry name" value="NSP15_NendoU_CoV"/>
</dbReference>
<dbReference type="InterPro" id="IPR009461">
    <property type="entry name" value="NSP16_CoV-like"/>
</dbReference>
<dbReference type="InterPro" id="IPR044384">
    <property type="entry name" value="NSP2_MHV-like"/>
</dbReference>
<dbReference type="InterPro" id="IPR043615">
    <property type="entry name" value="NSP2_N_CoV"/>
</dbReference>
<dbReference type="InterPro" id="IPR044381">
    <property type="entry name" value="NSP3_DPUP_MHV"/>
</dbReference>
<dbReference type="InterPro" id="IPR047567">
    <property type="entry name" value="NSP3_G2M_bCoV"/>
</dbReference>
<dbReference type="InterPro" id="IPR032592">
    <property type="entry name" value="NSP3_NAB_bCoV"/>
</dbReference>
<dbReference type="InterPro" id="IPR042570">
    <property type="entry name" value="NSP3_NAB_bCoV_sf"/>
</dbReference>
<dbReference type="InterPro" id="IPR044357">
    <property type="entry name" value="NSP3_Ubl1_dom_CoV"/>
</dbReference>
<dbReference type="InterPro" id="IPR044353">
    <property type="entry name" value="Nsp3_Ubl2_dom_CoV"/>
</dbReference>
<dbReference type="InterPro" id="IPR038083">
    <property type="entry name" value="NSP3A-like"/>
</dbReference>
<dbReference type="InterPro" id="IPR038123">
    <property type="entry name" value="NSP4_C_sf_CoV"/>
</dbReference>
<dbReference type="InterPro" id="IPR044367">
    <property type="entry name" value="NSP6_betaCoV"/>
</dbReference>
<dbReference type="InterPro" id="IPR043610">
    <property type="entry name" value="NSP6_CoV"/>
</dbReference>
<dbReference type="InterPro" id="IPR014828">
    <property type="entry name" value="NSP7_CoV"/>
</dbReference>
<dbReference type="InterPro" id="IPR037204">
    <property type="entry name" value="NSP7_sf_CoV"/>
</dbReference>
<dbReference type="InterPro" id="IPR014829">
    <property type="entry name" value="NSP8_CoV"/>
</dbReference>
<dbReference type="InterPro" id="IPR037230">
    <property type="entry name" value="NSP8_sf_CoV"/>
</dbReference>
<dbReference type="InterPro" id="IPR014822">
    <property type="entry name" value="NSP9_CoV"/>
</dbReference>
<dbReference type="InterPro" id="IPR036499">
    <property type="entry name" value="NSP9_sf_CoV"/>
</dbReference>
<dbReference type="InterPro" id="IPR027417">
    <property type="entry name" value="P-loop_NTPase"/>
</dbReference>
<dbReference type="InterPro" id="IPR002705">
    <property type="entry name" value="Pept_C30/C16_B_coronavir"/>
</dbReference>
<dbReference type="InterPro" id="IPR013016">
    <property type="entry name" value="Peptidase_C16_CoV"/>
</dbReference>
<dbReference type="InterPro" id="IPR008740">
    <property type="entry name" value="Peptidase_C30_CoV"/>
</dbReference>
<dbReference type="InterPro" id="IPR043477">
    <property type="entry name" value="Peptidase_C30_dom3_CoV"/>
</dbReference>
<dbReference type="InterPro" id="IPR009003">
    <property type="entry name" value="Peptidase_S1_PA"/>
</dbReference>
<dbReference type="InterPro" id="IPR043504">
    <property type="entry name" value="Peptidase_S1_PA_chymotrypsin"/>
</dbReference>
<dbReference type="InterPro" id="IPR043177">
    <property type="entry name" value="PLpro_N_sf_CoV"/>
</dbReference>
<dbReference type="InterPro" id="IPR043503">
    <property type="entry name" value="PLpro_palm_finger_dom_CoV"/>
</dbReference>
<dbReference type="InterPro" id="IPR043178">
    <property type="entry name" value="PLpro_thumb_sf_CoV"/>
</dbReference>
<dbReference type="InterPro" id="IPR046441">
    <property type="entry name" value="RdRp_CoV"/>
</dbReference>
<dbReference type="InterPro" id="IPR044347">
    <property type="entry name" value="RdRp_HCoV_HKU1-like"/>
</dbReference>
<dbReference type="InterPro" id="IPR009469">
    <property type="entry name" value="RdRp_N_CoV"/>
</dbReference>
<dbReference type="InterPro" id="IPR001205">
    <property type="entry name" value="RNA-dir_pol_C"/>
</dbReference>
<dbReference type="InterPro" id="IPR007094">
    <property type="entry name" value="RNA-dir_pol_PSvirus"/>
</dbReference>
<dbReference type="InterPro" id="IPR018995">
    <property type="entry name" value="RNA_synth_NSP10_CoV"/>
</dbReference>
<dbReference type="InterPro" id="IPR029063">
    <property type="entry name" value="SAM-dependent_MTases_sf"/>
</dbReference>
<dbReference type="PANTHER" id="PTHR43788">
    <property type="entry name" value="DNA2/NAM7 HELICASE FAMILY MEMBER"/>
    <property type="match status" value="1"/>
</dbReference>
<dbReference type="PANTHER" id="PTHR43788:SF16">
    <property type="entry name" value="HELICASE WITH ZINC FINGER 2"/>
    <property type="match status" value="1"/>
</dbReference>
<dbReference type="Pfam" id="PF13087">
    <property type="entry name" value="AAA_12"/>
    <property type="match status" value="1"/>
</dbReference>
<dbReference type="Pfam" id="PF13604">
    <property type="entry name" value="AAA_30"/>
    <property type="match status" value="1"/>
</dbReference>
<dbReference type="Pfam" id="PF11963">
    <property type="entry name" value="B-CoV_A_NSP1"/>
    <property type="match status" value="1"/>
</dbReference>
<dbReference type="Pfam" id="PF16251">
    <property type="entry name" value="bCoV_NAB"/>
    <property type="match status" value="1"/>
</dbReference>
<dbReference type="Pfam" id="PF06471">
    <property type="entry name" value="CoV_ExoN"/>
    <property type="match status" value="1"/>
</dbReference>
<dbReference type="Pfam" id="PF06460">
    <property type="entry name" value="CoV_Methyltr_2"/>
    <property type="match status" value="1"/>
</dbReference>
<dbReference type="Pfam" id="PF09401">
    <property type="entry name" value="CoV_NSP10"/>
    <property type="match status" value="1"/>
</dbReference>
<dbReference type="Pfam" id="PF20631">
    <property type="entry name" value="CoV_NSP13_1B"/>
    <property type="match status" value="1"/>
</dbReference>
<dbReference type="Pfam" id="PF20633">
    <property type="entry name" value="CoV_NSP13_stalk"/>
    <property type="match status" value="1"/>
</dbReference>
<dbReference type="Pfam" id="PF20632">
    <property type="entry name" value="CoV_NSP13_ZBD"/>
    <property type="match status" value="1"/>
</dbReference>
<dbReference type="Pfam" id="PF19215">
    <property type="entry name" value="CoV_NSP15_C"/>
    <property type="match status" value="1"/>
</dbReference>
<dbReference type="Pfam" id="PF19216">
    <property type="entry name" value="CoV_NSP15_M"/>
    <property type="match status" value="1"/>
</dbReference>
<dbReference type="Pfam" id="PF19219">
    <property type="entry name" value="CoV_NSP15_N"/>
    <property type="match status" value="1"/>
</dbReference>
<dbReference type="Pfam" id="PF19218">
    <property type="entry name" value="CoV_NSP3_C"/>
    <property type="match status" value="1"/>
</dbReference>
<dbReference type="Pfam" id="PF16348">
    <property type="entry name" value="CoV_NSP4_C"/>
    <property type="match status" value="1"/>
</dbReference>
<dbReference type="Pfam" id="PF19217">
    <property type="entry name" value="CoV_NSP4_N"/>
    <property type="match status" value="1"/>
</dbReference>
<dbReference type="Pfam" id="PF19213">
    <property type="entry name" value="CoV_NSP6"/>
    <property type="match status" value="1"/>
</dbReference>
<dbReference type="Pfam" id="PF08716">
    <property type="entry name" value="CoV_NSP7"/>
    <property type="match status" value="1"/>
</dbReference>
<dbReference type="Pfam" id="PF08717">
    <property type="entry name" value="CoV_NSP8"/>
    <property type="match status" value="1"/>
</dbReference>
<dbReference type="Pfam" id="PF08710">
    <property type="entry name" value="CoV_NSP9"/>
    <property type="match status" value="1"/>
</dbReference>
<dbReference type="Pfam" id="PF08715">
    <property type="entry name" value="CoV_peptidase"/>
    <property type="match status" value="1"/>
</dbReference>
<dbReference type="Pfam" id="PF06478">
    <property type="entry name" value="CoV_RPol_N"/>
    <property type="match status" value="1"/>
</dbReference>
<dbReference type="Pfam" id="PF01661">
    <property type="entry name" value="Macro"/>
    <property type="match status" value="1"/>
</dbReference>
<dbReference type="Pfam" id="PF22104">
    <property type="entry name" value="MHV_Nsp3_DPUP"/>
    <property type="match status" value="1"/>
</dbReference>
<dbReference type="Pfam" id="PF01831">
    <property type="entry name" value="Peptidase_C16"/>
    <property type="match status" value="1"/>
</dbReference>
<dbReference type="Pfam" id="PF05409">
    <property type="entry name" value="Peptidase_C30"/>
    <property type="match status" value="1"/>
</dbReference>
<dbReference type="Pfam" id="PF00680">
    <property type="entry name" value="RdRP_1"/>
    <property type="match status" value="1"/>
</dbReference>
<dbReference type="SMART" id="SM00506">
    <property type="entry name" value="A1pp"/>
    <property type="match status" value="1"/>
</dbReference>
<dbReference type="SUPFAM" id="SSF144246">
    <property type="entry name" value="Coronavirus NSP10-like"/>
    <property type="match status" value="1"/>
</dbReference>
<dbReference type="SUPFAM" id="SSF140367">
    <property type="entry name" value="Coronavirus NSP7-like"/>
    <property type="match status" value="1"/>
</dbReference>
<dbReference type="SUPFAM" id="SSF143076">
    <property type="entry name" value="Coronavirus NSP8-like"/>
    <property type="match status" value="1"/>
</dbReference>
<dbReference type="SUPFAM" id="SSF56672">
    <property type="entry name" value="DNA/RNA polymerases"/>
    <property type="match status" value="1"/>
</dbReference>
<dbReference type="SUPFAM" id="SSF142877">
    <property type="entry name" value="EndoU-like"/>
    <property type="match status" value="1"/>
</dbReference>
<dbReference type="SUPFAM" id="SSF52949">
    <property type="entry name" value="Macro domain-like"/>
    <property type="match status" value="1"/>
</dbReference>
<dbReference type="SUPFAM" id="SSF159936">
    <property type="entry name" value="NSP3A-like"/>
    <property type="match status" value="1"/>
</dbReference>
<dbReference type="SUPFAM" id="SSF52540">
    <property type="entry name" value="P-loop containing nucleoside triphosphate hydrolases"/>
    <property type="match status" value="1"/>
</dbReference>
<dbReference type="SUPFAM" id="SSF101816">
    <property type="entry name" value="Replicase NSP9"/>
    <property type="match status" value="1"/>
</dbReference>
<dbReference type="SUPFAM" id="SSF53335">
    <property type="entry name" value="S-adenosyl-L-methionine-dependent methyltransferases"/>
    <property type="match status" value="2"/>
</dbReference>
<dbReference type="SUPFAM" id="SSF50494">
    <property type="entry name" value="Trypsin-like serine proteases"/>
    <property type="match status" value="1"/>
</dbReference>
<dbReference type="PROSITE" id="PS51961">
    <property type="entry name" value="AV_NSP11N_COV_NSP15M"/>
    <property type="match status" value="1"/>
</dbReference>
<dbReference type="PROSITE" id="PS51963">
    <property type="entry name" value="BCOV_NSP1_C"/>
    <property type="match status" value="1"/>
</dbReference>
<dbReference type="PROSITE" id="PS51942">
    <property type="entry name" value="BCOV_NSP3C_C"/>
    <property type="match status" value="1"/>
</dbReference>
<dbReference type="PROSITE" id="PS51994">
    <property type="entry name" value="BCOV_NSP3E_G2M"/>
    <property type="match status" value="1"/>
</dbReference>
<dbReference type="PROSITE" id="PS51945">
    <property type="entry name" value="BCOV_NSP3E_NAB"/>
    <property type="match status" value="1"/>
</dbReference>
<dbReference type="PROSITE" id="PS51993">
    <property type="entry name" value="COV_3ECTO"/>
    <property type="match status" value="1"/>
</dbReference>
<dbReference type="PROSITE" id="PS51952">
    <property type="entry name" value="COV_EXON_MTASE_COACT"/>
    <property type="match status" value="1"/>
</dbReference>
<dbReference type="PROSITE" id="PS51954">
    <property type="entry name" value="COV_N7_MTASE"/>
    <property type="match status" value="1"/>
</dbReference>
<dbReference type="PROSITE" id="PS51962">
    <property type="entry name" value="COV_NSP1"/>
    <property type="match status" value="1"/>
</dbReference>
<dbReference type="PROSITE" id="PS52000">
    <property type="entry name" value="COV_NSP12_IF"/>
    <property type="match status" value="1"/>
</dbReference>
<dbReference type="PROSITE" id="PS51948">
    <property type="entry name" value="COV_NSP12_RDRP"/>
    <property type="match status" value="1"/>
</dbReference>
<dbReference type="PROSITE" id="PS51960">
    <property type="entry name" value="COV_NSP15_NTD"/>
    <property type="match status" value="1"/>
</dbReference>
<dbReference type="PROSITE" id="PS51991">
    <property type="entry name" value="COV_NSP2_C"/>
    <property type="match status" value="1"/>
</dbReference>
<dbReference type="PROSITE" id="PS51990">
    <property type="entry name" value="COV_NSP2_M"/>
    <property type="match status" value="1"/>
</dbReference>
<dbReference type="PROSITE" id="PS51989">
    <property type="entry name" value="COV_NSP2_N"/>
    <property type="match status" value="1"/>
</dbReference>
<dbReference type="PROSITE" id="PS51992">
    <property type="entry name" value="COV_NSP3_Y"/>
    <property type="match status" value="1"/>
</dbReference>
<dbReference type="PROSITE" id="PS51943">
    <property type="entry name" value="COV_NSP3A_UBL"/>
    <property type="match status" value="1"/>
</dbReference>
<dbReference type="PROSITE" id="PS51944">
    <property type="entry name" value="COV_NSP3D_UBL"/>
    <property type="match status" value="1"/>
</dbReference>
<dbReference type="PROSITE" id="PS51946">
    <property type="entry name" value="COV_NSP4C"/>
    <property type="match status" value="1"/>
</dbReference>
<dbReference type="PROSITE" id="PS51949">
    <property type="entry name" value="COV_NSP7"/>
    <property type="match status" value="1"/>
</dbReference>
<dbReference type="PROSITE" id="PS51950">
    <property type="entry name" value="COV_NSP8"/>
    <property type="match status" value="1"/>
</dbReference>
<dbReference type="PROSITE" id="PS51951">
    <property type="entry name" value="COV_NSP9_SSRNA_BD"/>
    <property type="match status" value="1"/>
</dbReference>
<dbReference type="PROSITE" id="PS51653">
    <property type="entry name" value="CV_ZBD"/>
    <property type="match status" value="1"/>
</dbReference>
<dbReference type="PROSITE" id="PS51442">
    <property type="entry name" value="M_PRO"/>
    <property type="match status" value="1"/>
</dbReference>
<dbReference type="PROSITE" id="PS51154">
    <property type="entry name" value="MACRO"/>
    <property type="match status" value="1"/>
</dbReference>
<dbReference type="PROSITE" id="PS51958">
    <property type="entry name" value="NENDOU"/>
    <property type="match status" value="1"/>
</dbReference>
<dbReference type="PROSITE" id="PS51947">
    <property type="entry name" value="NIRAN"/>
    <property type="match status" value="1"/>
</dbReference>
<dbReference type="PROSITE" id="PS51955">
    <property type="entry name" value="NIV_2_O_MTASE"/>
    <property type="match status" value="1"/>
</dbReference>
<dbReference type="PROSITE" id="PS51953">
    <property type="entry name" value="NIV_EXON"/>
    <property type="match status" value="1"/>
</dbReference>
<dbReference type="PROSITE" id="PS51124">
    <property type="entry name" value="PEPTIDASE_C16"/>
    <property type="match status" value="2"/>
</dbReference>
<dbReference type="PROSITE" id="PS51657">
    <property type="entry name" value="PSRV_HELICASE"/>
    <property type="match status" value="1"/>
</dbReference>
<dbReference type="PROSITE" id="PS50507">
    <property type="entry name" value="RDRP_SSRNA_POS"/>
    <property type="match status" value="1"/>
</dbReference>
<gene>
    <name type="primary">rep</name>
    <name type="ORF">1a-1b</name>
</gene>
<evidence type="ECO:0000250" key="1"/>
<evidence type="ECO:0000250" key="2">
    <source>
        <dbReference type="UniProtKB" id="P0C6X7"/>
    </source>
</evidence>
<evidence type="ECO:0000250" key="3">
    <source>
        <dbReference type="UniProtKB" id="P0DTD1"/>
    </source>
</evidence>
<evidence type="ECO:0000255" key="4"/>
<evidence type="ECO:0000255" key="5">
    <source>
        <dbReference type="PROSITE-ProRule" id="PRU00214"/>
    </source>
</evidence>
<evidence type="ECO:0000255" key="6">
    <source>
        <dbReference type="PROSITE-ProRule" id="PRU00444"/>
    </source>
</evidence>
<evidence type="ECO:0000255" key="7">
    <source>
        <dbReference type="PROSITE-ProRule" id="PRU00490"/>
    </source>
</evidence>
<evidence type="ECO:0000255" key="8">
    <source>
        <dbReference type="PROSITE-ProRule" id="PRU00539"/>
    </source>
</evidence>
<evidence type="ECO:0000255" key="9">
    <source>
        <dbReference type="PROSITE-ProRule" id="PRU00772"/>
    </source>
</evidence>
<evidence type="ECO:0000255" key="10">
    <source>
        <dbReference type="PROSITE-ProRule" id="PRU00986"/>
    </source>
</evidence>
<evidence type="ECO:0000255" key="11">
    <source>
        <dbReference type="PROSITE-ProRule" id="PRU01289"/>
    </source>
</evidence>
<evidence type="ECO:0000255" key="12">
    <source>
        <dbReference type="PROSITE-ProRule" id="PRU01290"/>
    </source>
</evidence>
<evidence type="ECO:0000255" key="13">
    <source>
        <dbReference type="PROSITE-ProRule" id="PRU01291"/>
    </source>
</evidence>
<evidence type="ECO:0000255" key="14">
    <source>
        <dbReference type="PROSITE-ProRule" id="PRU01292"/>
    </source>
</evidence>
<evidence type="ECO:0000255" key="15">
    <source>
        <dbReference type="PROSITE-ProRule" id="PRU01293"/>
    </source>
</evidence>
<evidence type="ECO:0000255" key="16">
    <source>
        <dbReference type="PROSITE-ProRule" id="PRU01294"/>
    </source>
</evidence>
<evidence type="ECO:0000255" key="17">
    <source>
        <dbReference type="PROSITE-ProRule" id="PRU01295"/>
    </source>
</evidence>
<evidence type="ECO:0000255" key="18">
    <source>
        <dbReference type="PROSITE-ProRule" id="PRU01296"/>
    </source>
</evidence>
<evidence type="ECO:0000255" key="19">
    <source>
        <dbReference type="PROSITE-ProRule" id="PRU01297"/>
    </source>
</evidence>
<evidence type="ECO:0000255" key="20">
    <source>
        <dbReference type="PROSITE-ProRule" id="PRU01298"/>
    </source>
</evidence>
<evidence type="ECO:0000255" key="21">
    <source>
        <dbReference type="PROSITE-ProRule" id="PRU01299"/>
    </source>
</evidence>
<evidence type="ECO:0000255" key="22">
    <source>
        <dbReference type="PROSITE-ProRule" id="PRU01300"/>
    </source>
</evidence>
<evidence type="ECO:0000255" key="23">
    <source>
        <dbReference type="PROSITE-ProRule" id="PRU01303"/>
    </source>
</evidence>
<evidence type="ECO:0000255" key="24">
    <source>
        <dbReference type="PROSITE-ProRule" id="PRU01305"/>
    </source>
</evidence>
<evidence type="ECO:0000255" key="25">
    <source>
        <dbReference type="PROSITE-ProRule" id="PRU01306"/>
    </source>
</evidence>
<evidence type="ECO:0000255" key="26">
    <source>
        <dbReference type="PROSITE-ProRule" id="PRU01307"/>
    </source>
</evidence>
<evidence type="ECO:0000255" key="27">
    <source>
        <dbReference type="PROSITE-ProRule" id="PRU01308"/>
    </source>
</evidence>
<evidence type="ECO:0000255" key="28">
    <source>
        <dbReference type="PROSITE-ProRule" id="PRU01333"/>
    </source>
</evidence>
<evidence type="ECO:0000255" key="29">
    <source>
        <dbReference type="PROSITE-ProRule" id="PRU01334"/>
    </source>
</evidence>
<evidence type="ECO:0000255" key="30">
    <source>
        <dbReference type="PROSITE-ProRule" id="PRU01335"/>
    </source>
</evidence>
<evidence type="ECO:0000255" key="31">
    <source>
        <dbReference type="PROSITE-ProRule" id="PRU01336"/>
    </source>
</evidence>
<evidence type="ECO:0000255" key="32">
    <source>
        <dbReference type="PROSITE-ProRule" id="PRU01337"/>
    </source>
</evidence>
<evidence type="ECO:0000255" key="33">
    <source>
        <dbReference type="PROSITE-ProRule" id="PRU01338"/>
    </source>
</evidence>
<evidence type="ECO:0000255" key="34">
    <source>
        <dbReference type="PROSITE-ProRule" id="PRU01344"/>
    </source>
</evidence>
<evidence type="ECO:0000256" key="35">
    <source>
        <dbReference type="SAM" id="MobiDB-lite"/>
    </source>
</evidence>
<evidence type="ECO:0000305" key="36"/>
<name>R1AB_CVM2</name>
<proteinExistence type="inferred from homology"/>
<comment type="function">
    <text evidence="2">The replicase polyprotein of coronaviruses is a multifunctional protein: it contains the activities necessary for the transcription of negative stranded RNA, leader RNA, subgenomic mRNAs and progeny virion RNA as well as proteinases responsible for the cleavage of the polyprotein into functional products.</text>
</comment>
<comment type="function">
    <molecule>Host translation inhibitor nsp1</molecule>
    <text evidence="2">Inhibits host translation by interacting with the 40S ribosomal subunit. The nsp1-40S ribosome complex further induces an endonucleolytic cleavage near the 5'UTR of host mRNAs, targeting them for degradation. Viral mRNAs are not susceptible to nsp1-mediated endonucleolytic RNA cleavage thanks to the presence of a 5'-end leader sequence and are therefore protected from degradation. By suppressing host gene expression, nsp1 facilitates efficient viral gene expression in infected cells and evasion from host immune response.</text>
</comment>
<comment type="function">
    <molecule>Non-structural protein 2</molecule>
    <text evidence="2">May play a role in the modulation of host cell survival signaling pathway by interacting with host PHB and PHB2. Indeed, these two proteins play a role in maintaining the functional integrity of the mitochondria and protecting cells from various stresses.</text>
</comment>
<comment type="function">
    <molecule>Papain-like proteinase nsp3</molecule>
    <text evidence="2">Responsible for the cleavages located at the N-terminus of the replicase polyprotein. In addition, PL-PRO possesses a deubiquitinating/deISGylating activity and processes both 'Lys-48'- and 'Lys-63'-linked polyubiquitin chains from cellular substrates. Participates together with nsp4 in the assembly of virally-induced cytoplasmic double-membrane vesicles necessary for viral replication. Antagonizes innate immune induction of type I interferon by blocking the phosphorylation, dimerization and subsequent nuclear translocation of host IRF3. Also prevents host NF-kappa-B signaling.</text>
</comment>
<comment type="function">
    <molecule>Non-structural protein 4</molecule>
    <text evidence="2">Participates in the assembly of virally-induced cytoplasmic double-membrane vesicles necessary for viral replication.</text>
</comment>
<comment type="function">
    <molecule>3C-like proteinase nsp5</molecule>
    <text evidence="2 9">Cleaves the C-terminus of replicase polyprotein at 11 sites. Recognizes substrates containing the core sequence [ILMVF]-Q-|-[SGACN]. Also able to bind an ADP-ribose-1''-phosphate (ADRP).</text>
</comment>
<comment type="function">
    <molecule>Non-structural protein 6</molecule>
    <text evidence="2">Plays a role in the initial induction of autophagosomes from host endoplasmic reticulum. Later, limits the expansion of these phagosomes that are no longer able to deliver viral components to lysosomes.</text>
</comment>
<comment type="function">
    <molecule>Non-structural protein 7</molecule>
    <text evidence="2">Forms a hexadecamer with nsp8 (8 subunits of each) that may participate in viral replication by acting as a primase. Alternatively, may synthesize substantially longer products than oligonucleotide primers.</text>
</comment>
<comment type="function">
    <molecule>Non-structural protein 8</molecule>
    <text evidence="2">Forms a hexadecamer with nsp7 (8 subunits of each) that may participate in viral replication by acting as a primase. Alternatively, may synthesize substantially longer products than oligonucleotide primers.</text>
</comment>
<comment type="function">
    <molecule>Viral protein genome-linked nsp9</molecule>
    <text evidence="3">Forms a primer, NSP9-pU, which is utilized by the polymerase for the initiation of RNA chains. Interacts with ribosome signal recognition particle RNA (SRP). Together with NSP8, suppress protein integration into the cell membrane, thereby disrupting host immune defenses.</text>
</comment>
<comment type="function">
    <molecule>Non-structural protein 10</molecule>
    <text evidence="2">Plays a pivotal role in viral transcription by stimulating both nsp14 3'-5' exoribonuclease and nsp16 2'-O-methyltransferase activities. Therefore plays an essential role in viral mRNAs cap methylation.</text>
</comment>
<comment type="function">
    <molecule>RNA-directed RNA polymerase nsp12</molecule>
    <text evidence="3">RNA-directed RNA polymerase that catalyzes the transcription of viral genomic and subgenomic RNAs. Acts in complex with nsp7 and nsp8 to transcribe both the minus and positive strands of genomic RNA. The kinase-like NiRAN domain of NSP12 attaches one or more nucleotides to the amino terminus of NSP9, forming a covalent RNA-protein intermediate that serves as transcription/replication primer. Subgenomic RNAs (sgRNAs) are formed by discontinuous transcription: The polymerase has the ability to pause at transcription-regulating sequences (TRS) and jump to the leader TRS, resulting in a major deletion. This creates a series of subgenomic RNAs that are replicated, transcribed and translated. In addition, Nsp12 is a subunit of the viral RNA capping enzyme that catalyzes the RNA guanylyltransferase reaction for genomic and sub-genomic RNAs. Subsequently, the NiRAN domain transfers RNA to GDP, and forms the core cap structure GpppA-RNA.</text>
</comment>
<comment type="function">
    <molecule>Helicase nsp13</molecule>
    <text evidence="2">Multi-functional protein with a zinc-binding domain in N-terminus displaying RNA and DNA duplex-unwinding activities with 5' to 3' polarity. Activity of helicase is dependent on magnesium.</text>
</comment>
<comment type="function">
    <molecule>Guanine-N7 methyltransferase nsp14</molecule>
    <text evidence="2">Plays a role in viral RNA synthesis through two distinct activities. The N7-guanine methyltransferase activity plays a role in the formation of the cap structure GpppA-RNA. The proofreading exoribonuclease reduces the sensitivity of the virus to RNA mutagens during replication. This activity acts on both ssRNA and dsRNA in a 3'-5' direction.</text>
</comment>
<comment type="function">
    <molecule>Uridylate-specific endoribonuclease nsp15</molecule>
    <text evidence="2">Plays a role in viral transcription/replication and prevents the simultaneous activation of host cell dsRNA sensors, such as MDA5/IFIH1, OAS, and PKR (By similarity). Acts by degrading the 5'-polyuridines generated during replication of the poly(A) region of viral genomic and subgenomic RNAs. Catalyzes a two-step reaction in which a 2'3'-cyclic phosphate (2'3'-cP) is first generated by 2'-O transesterification, which is then hydrolyzed to a 3'-phosphate (3'-P) (By similarity). If not degraded, poly(U) RNA would hybridize with poly(A) RNA tails and activate host dsRNA sensors (By similarity).</text>
</comment>
<comment type="function">
    <molecule>2'-O-methyltransferase nsp16</molecule>
    <text evidence="2">Methyltransferase that mediates mRNA cap 2'-O-ribose methylation to the 5'-cap structure of viral mRNAs. N7-methyl guanosine cap is a prerequisite for binding of nsp16. Therefore plays an essential role in viral mRNAs cap methylation which is essential to evade immune system.</text>
</comment>
<comment type="catalytic activity">
    <molecule>RNA-directed RNA polymerase nsp12</molecule>
    <reaction evidence="8">
        <text>RNA(n) + a ribonucleoside 5'-triphosphate = RNA(n+1) + diphosphate</text>
        <dbReference type="Rhea" id="RHEA:21248"/>
        <dbReference type="Rhea" id="RHEA-COMP:14527"/>
        <dbReference type="Rhea" id="RHEA-COMP:17342"/>
        <dbReference type="ChEBI" id="CHEBI:33019"/>
        <dbReference type="ChEBI" id="CHEBI:61557"/>
        <dbReference type="ChEBI" id="CHEBI:140395"/>
        <dbReference type="EC" id="2.7.7.48"/>
    </reaction>
</comment>
<comment type="catalytic activity">
    <molecule>Helicase nsp13</molecule>
    <reaction>
        <text>ATP + H2O = ADP + phosphate + H(+)</text>
        <dbReference type="Rhea" id="RHEA:13065"/>
        <dbReference type="ChEBI" id="CHEBI:15377"/>
        <dbReference type="ChEBI" id="CHEBI:15378"/>
        <dbReference type="ChEBI" id="CHEBI:30616"/>
        <dbReference type="ChEBI" id="CHEBI:43474"/>
        <dbReference type="ChEBI" id="CHEBI:456216"/>
        <dbReference type="EC" id="3.6.4.12"/>
    </reaction>
</comment>
<comment type="catalytic activity">
    <molecule>Helicase nsp13</molecule>
    <reaction>
        <text>ATP + H2O = ADP + phosphate + H(+)</text>
        <dbReference type="Rhea" id="RHEA:13065"/>
        <dbReference type="ChEBI" id="CHEBI:15377"/>
        <dbReference type="ChEBI" id="CHEBI:15378"/>
        <dbReference type="ChEBI" id="CHEBI:30616"/>
        <dbReference type="ChEBI" id="CHEBI:43474"/>
        <dbReference type="ChEBI" id="CHEBI:456216"/>
        <dbReference type="EC" id="3.6.4.13"/>
    </reaction>
</comment>
<comment type="catalytic activity">
    <molecule>Papain-like proteinase nsp3</molecule>
    <reaction>
        <text>Thiol-dependent hydrolysis of ester, thioester, amide, peptide and isopeptide bonds formed by the C-terminal Gly of ubiquitin (a 76-residue protein attached to proteins as an intracellular targeting signal).</text>
        <dbReference type="EC" id="3.4.19.12"/>
    </reaction>
</comment>
<comment type="catalytic activity">
    <molecule>2'-O-methyltransferase nsp16</molecule>
    <reaction evidence="2">
        <text>a 5'-end (N(7)-methyl 5'-triphosphoguanosine)-ribonucleoside in mRNA + S-adenosyl-L-methionine = a 5'-end (N(7)-methyl 5'-triphosphoguanosine)-(2'-O-methyl-ribonucleoside) in mRNA + S-adenosyl-L-homocysteine + H(+)</text>
        <dbReference type="Rhea" id="RHEA:67020"/>
        <dbReference type="Rhea" id="RHEA-COMP:17167"/>
        <dbReference type="Rhea" id="RHEA-COMP:17168"/>
        <dbReference type="ChEBI" id="CHEBI:15378"/>
        <dbReference type="ChEBI" id="CHEBI:57856"/>
        <dbReference type="ChEBI" id="CHEBI:59789"/>
        <dbReference type="ChEBI" id="CHEBI:156461"/>
        <dbReference type="ChEBI" id="CHEBI:167609"/>
        <dbReference type="EC" id="2.1.1.57"/>
    </reaction>
</comment>
<comment type="catalytic activity">
    <molecule>Uridylate-specific endoribonuclease nsp15</molecule>
    <reaction evidence="2">
        <text>uridylyl-uridylyl-ribonucleotide-RNA = a 3'-end uridylyl-2',3'-cyclophospho-uridine-RNA + a 5'-end dephospho-ribonucleoside-RNA</text>
        <dbReference type="Rhea" id="RHEA:67732"/>
        <dbReference type="Rhea" id="RHEA-COMP:13936"/>
        <dbReference type="Rhea" id="RHEA-COMP:17334"/>
        <dbReference type="Rhea" id="RHEA-COMP:17335"/>
        <dbReference type="ChEBI" id="CHEBI:138284"/>
        <dbReference type="ChEBI" id="CHEBI:173079"/>
        <dbReference type="ChEBI" id="CHEBI:173080"/>
    </reaction>
</comment>
<comment type="catalytic activity">
    <molecule>RNA-directed RNA polymerase nsp12</molecule>
    <reaction evidence="3">
        <text>a 5'-end diphospho-ribonucleoside in mRNA + GTP + H(+) = a 5'-end (5'-triphosphoguanosine)-ribonucleoside in mRNA + diphosphate</text>
        <dbReference type="Rhea" id="RHEA:67012"/>
        <dbReference type="Rhea" id="RHEA-COMP:17165"/>
        <dbReference type="Rhea" id="RHEA-COMP:17166"/>
        <dbReference type="ChEBI" id="CHEBI:15378"/>
        <dbReference type="ChEBI" id="CHEBI:33019"/>
        <dbReference type="ChEBI" id="CHEBI:37565"/>
        <dbReference type="ChEBI" id="CHEBI:167616"/>
        <dbReference type="ChEBI" id="CHEBI:167617"/>
        <dbReference type="EC" id="2.7.7.50"/>
    </reaction>
    <physiologicalReaction direction="left-to-right" evidence="3">
        <dbReference type="Rhea" id="RHEA:67013"/>
    </physiologicalReaction>
</comment>
<comment type="catalytic activity">
    <molecule>Guanine-N7 methyltransferase nsp14</molecule>
    <reaction evidence="2">
        <text>a 5'-end (5'-triphosphoguanosine)-ribonucleoside in mRNA + S-adenosyl-L-methionine = a 5'-end (N(7)-methyl 5'-triphosphoguanosine)-ribonucleoside in mRNA + S-adenosyl-L-homocysteine</text>
        <dbReference type="Rhea" id="RHEA:67008"/>
        <dbReference type="Rhea" id="RHEA-COMP:17166"/>
        <dbReference type="Rhea" id="RHEA-COMP:17167"/>
        <dbReference type="ChEBI" id="CHEBI:57856"/>
        <dbReference type="ChEBI" id="CHEBI:59789"/>
        <dbReference type="ChEBI" id="CHEBI:156461"/>
        <dbReference type="ChEBI" id="CHEBI:167617"/>
        <dbReference type="EC" id="2.1.1.56"/>
    </reaction>
    <physiologicalReaction direction="left-to-right" evidence="2">
        <dbReference type="Rhea" id="RHEA:67009"/>
    </physiologicalReaction>
</comment>
<comment type="cofactor">
    <molecule>Uridylate-specific endoribonuclease nsp15</molecule>
    <cofactor evidence="2">
        <name>Mn(2+)</name>
        <dbReference type="ChEBI" id="CHEBI:29035"/>
    </cofactor>
    <text evidence="2">Likely affects Nsp15 binding to RNA.</text>
</comment>
<comment type="cofactor">
    <molecule>Non-structural protein 10</molecule>
    <cofactor evidence="3">
        <name>Mg(2+)</name>
        <dbReference type="ChEBI" id="CHEBI:18420"/>
    </cofactor>
</comment>
<comment type="subunit">
    <molecule>Non-structural protein 2</molecule>
    <text evidence="2">Interacts with host PHB and PHB2.</text>
</comment>
<comment type="subunit">
    <molecule>Non-structural protein 4</molecule>
    <text evidence="2">Interacts with papain-like protease nsp3 and non-structural protein 6.</text>
</comment>
<comment type="subunit">
    <molecule>3C-like proteinase nsp5</molecule>
    <text evidence="2">Monomer. Homodimer. Only the homodimer shows catalytic activity.</text>
</comment>
<comment type="subunit">
    <molecule>Non-structural protein 7</molecule>
    <text evidence="3">Interacts with nsp8 and nsp12 to form the replication-transcription complex (RTC): nsp12, nsp7, two subunits of nsp8, and up to two subunits of nsp13.</text>
</comment>
<comment type="subunit">
    <molecule>Non-structural protein 8</molecule>
    <text evidence="3">Interacts with nsp7, nsp13 and nsp12 to form the replication-transcription complex (RTC): nsp12, nsp7, two subunits of nsp8, and up to two subunits of nsp13.</text>
</comment>
<comment type="subunit">
    <molecule>Viral protein genome-linked nsp9</molecule>
    <text evidence="3">Interacts with nsp12.</text>
</comment>
<comment type="subunit">
    <molecule>Non-structural protein 10</molecule>
    <text evidence="3">Interacts with proofreading exoribonuclease nsp14 and 2'-O-methyltransferase nsp16; these interactions enhance nsp14 and nsp16 enzymatic activities.</text>
</comment>
<comment type="subunit">
    <molecule>RNA-directed RNA polymerase nsp12</molecule>
    <text evidence="3">Interacts with nsp7 and nsp8 to form the replication-transcription complex (RTC): nsp12, nsp7, two subunits of nsp8, and up to two subunits of nsp13. Interacts with nsp9.</text>
</comment>
<comment type="subunit">
    <molecule>Helicase nsp13</molecule>
    <text evidence="3">Interacts with nsp8 to form the replication-transcription complex (RTC): nsp12, nsp7, two subunits of nsp8, and up to two subunits of nsp13.</text>
</comment>
<comment type="subcellular location">
    <molecule>Papain-like proteinase nsp3</molecule>
    <subcellularLocation>
        <location evidence="36">Host membrane</location>
        <topology evidence="36">Multi-pass membrane protein</topology>
    </subcellularLocation>
</comment>
<comment type="subcellular location">
    <molecule>Non-structural protein 4</molecule>
    <subcellularLocation>
        <location evidence="36">Host membrane</location>
        <topology evidence="36">Multi-pass membrane protein</topology>
    </subcellularLocation>
</comment>
<comment type="subcellular location">
    <molecule>Non-structural protein 6</molecule>
    <subcellularLocation>
        <location evidence="36">Host membrane</location>
        <topology evidence="36">Multi-pass membrane protein</topology>
    </subcellularLocation>
</comment>
<comment type="subcellular location">
    <molecule>Non-structural protein 7</molecule>
    <subcellularLocation>
        <location evidence="1">Host cytoplasm</location>
        <location evidence="1">Host perinuclear region</location>
    </subcellularLocation>
    <text evidence="1">nsp7, nsp8, nsp9 and nsp10 are localized in cytoplasmic foci, largely perinuclear. Late in infection, they merge into confluent complexes (By similarity).</text>
</comment>
<comment type="subcellular location">
    <molecule>Non-structural protein 8</molecule>
    <subcellularLocation>
        <location evidence="1">Host cytoplasm</location>
        <location evidence="1">Host perinuclear region</location>
    </subcellularLocation>
    <text evidence="1">nsp7, nsp8, nsp9 and nsp10 are localized in cytoplasmic foci, largely perinuclear. Late in infection, they merge into confluent complexes (By similarity).</text>
</comment>
<comment type="subcellular location">
    <molecule>Viral protein genome-linked nsp9</molecule>
    <subcellularLocation>
        <location evidence="1">Host cytoplasm</location>
        <location evidence="1">Host perinuclear region</location>
    </subcellularLocation>
    <text evidence="1">nsp7, nsp8, nsp9 and nsp10 are localized in cytoplasmic foci, largely perinuclear. Late in infection, they merge into confluent complexes (By similarity).</text>
</comment>
<comment type="subcellular location">
    <molecule>Non-structural protein 10</molecule>
    <subcellularLocation>
        <location evidence="1">Host cytoplasm</location>
        <location evidence="1">Host perinuclear region</location>
    </subcellularLocation>
    <text evidence="1">nsp7, nsp8, nsp9 and nsp10 are localized in cytoplasmic foci, largely perinuclear. Late in infection, they merge into confluent complexes (By similarity).</text>
</comment>
<comment type="subcellular location">
    <molecule>Helicase nsp13</molecule>
    <subcellularLocation>
        <location evidence="36">Host endoplasmic reticulum-Golgi intermediate compartment</location>
    </subcellularLocation>
    <text evidence="1">The helicase interacts with the N protein in membranous complexes and colocalizes with sites of synthesis of new viral RNA.</text>
</comment>
<comment type="subcellular location">
    <molecule>Uridylate-specific endoribonuclease nsp15</molecule>
    <subcellularLocation>
        <location evidence="1">Host cytoplasm</location>
        <location evidence="1">Host perinuclear region</location>
    </subcellularLocation>
</comment>
<comment type="alternative products">
    <event type="ribosomal frameshifting"/>
    <isoform>
        <id>P0C6X8-1</id>
        <name>Replicase polyprotein 1ab</name>
        <name>pp1ab</name>
        <sequence type="displayed"/>
    </isoform>
    <isoform>
        <id>P0C6U9-1</id>
        <name>Replicase polyprotein 1a</name>
        <name>pp1a</name>
        <name>ORF1a polyprotein</name>
        <sequence type="external"/>
    </isoform>
</comment>
<comment type="domain">
    <text>The hydrophobic domains (HD) could mediate the membrane association of the replication complex and thereby alter the architecture of the host cell membrane.</text>
</comment>
<comment type="PTM">
    <text evidence="1">Specific enzymatic cleavages in vivo by its own proteases yield mature proteins. 3CL-PRO and PL-PRO proteinases are autocatalytically processed (By similarity).</text>
</comment>
<comment type="miscellaneous">
    <molecule>Isoform Replicase polyprotein 1ab</molecule>
    <text>Produced by -1 ribosomal frameshifting at the 1a-1b genes boundary.</text>
</comment>
<comment type="similarity">
    <text evidence="36">Belongs to the coronaviruses polyprotein 1ab family.</text>
</comment>
<comment type="sequence caution" evidence="36">
    <conflict type="erroneous gene model prediction">
        <sequence resource="EMBL-CDS" id="AAF19383"/>
    </conflict>
</comment>
<comment type="sequence caution" evidence="36">
    <conflict type="erroneous gene model prediction">
        <sequence resource="EMBL-CDS" id="AAF19384"/>
    </conflict>
</comment>
<feature type="chain" id="PRO_0000037323" description="Host translation inhibitor nsp1" evidence="2">
    <location>
        <begin position="1"/>
        <end position="247"/>
    </location>
</feature>
<feature type="chain" id="PRO_0000037324" description="Non-structural protein 2" evidence="2">
    <location>
        <begin position="248"/>
        <end position="832"/>
    </location>
</feature>
<feature type="chain" id="PRO_0000037325" description="Papain-like proteinase nsp3" evidence="2">
    <location>
        <begin position="833"/>
        <end position="2783"/>
    </location>
</feature>
<feature type="chain" id="PRO_0000037326" description="Non-structural protein 4" evidence="2">
    <location>
        <begin position="2784"/>
        <end position="3279"/>
    </location>
</feature>
<feature type="chain" id="PRO_0000037327" description="3C-like proteinase nsp5" evidence="2">
    <location>
        <begin position="3280"/>
        <end position="3582"/>
    </location>
</feature>
<feature type="chain" id="PRO_0000037328" description="Non-structural protein 6" evidence="2">
    <location>
        <begin position="3583"/>
        <end position="3869"/>
    </location>
</feature>
<feature type="chain" id="PRO_0000037329" description="Non-structural protein 7" evidence="2">
    <location>
        <begin position="3870"/>
        <end position="3961"/>
    </location>
</feature>
<feature type="chain" id="PRO_0000037330" description="Non-structural protein 8" evidence="2">
    <location>
        <begin position="3962"/>
        <end position="4155"/>
    </location>
</feature>
<feature type="chain" id="PRO_0000037331" description="Viral protein genome-linked nsp9" evidence="2">
    <location>
        <begin position="4156"/>
        <end position="4265"/>
    </location>
</feature>
<feature type="chain" id="PRO_0000037332" description="Non-structural protein 10" evidence="2">
    <location>
        <begin position="4266"/>
        <end position="4402"/>
    </location>
</feature>
<feature type="chain" id="PRO_0000037333" description="RNA-directed RNA polymerase nsp12" evidence="2">
    <location>
        <begin position="4403"/>
        <end position="5330"/>
    </location>
</feature>
<feature type="chain" id="PRO_0000037334" description="Helicase nsp13" evidence="2">
    <location>
        <begin position="5331"/>
        <end position="5930"/>
    </location>
</feature>
<feature type="chain" id="PRO_0000037335" description="Guanine-N7 methyltransferase nsp14" evidence="2">
    <location>
        <begin position="5931"/>
        <end position="6451"/>
    </location>
</feature>
<feature type="chain" id="PRO_0000037336" description="Uridylate-specific endoribonuclease nsp15" evidence="2">
    <location>
        <begin position="6452"/>
        <end position="6825"/>
    </location>
</feature>
<feature type="chain" id="PRO_0000037337" description="2'-O-methyltransferase nsp16" evidence="2">
    <location>
        <begin position="6826"/>
        <end position="7124"/>
    </location>
</feature>
<feature type="transmembrane region" description="Helical" evidence="4">
    <location>
        <begin position="2232"/>
        <end position="2252"/>
    </location>
</feature>
<feature type="transmembrane region" description="Helical" evidence="4">
    <location>
        <begin position="2260"/>
        <end position="2280"/>
    </location>
</feature>
<feature type="transmembrane region" description="Helical" evidence="4">
    <location>
        <begin position="2346"/>
        <end position="2366"/>
    </location>
</feature>
<feature type="transmembrane region" description="Helical" evidence="4">
    <location>
        <begin position="2388"/>
        <end position="2408"/>
    </location>
</feature>
<feature type="transmembrane region" description="Helical" evidence="4">
    <location>
        <begin position="2789"/>
        <end position="2809"/>
    </location>
</feature>
<feature type="transmembrane region" description="Helical" evidence="4">
    <location>
        <begin position="2869"/>
        <end position="2889"/>
    </location>
</feature>
<feature type="transmembrane region" description="Helical" evidence="4">
    <location>
        <begin position="3042"/>
        <end position="3062"/>
    </location>
</feature>
<feature type="transmembrane region" description="Helical" evidence="4">
    <location>
        <begin position="3064"/>
        <end position="3084"/>
    </location>
</feature>
<feature type="transmembrane region" description="Helical" evidence="4">
    <location>
        <begin position="3096"/>
        <end position="3116"/>
    </location>
</feature>
<feature type="transmembrane region" description="Helical" evidence="4">
    <location>
        <begin position="3123"/>
        <end position="3143"/>
    </location>
</feature>
<feature type="transmembrane region" description="Helical" evidence="4">
    <location>
        <begin position="3148"/>
        <end position="3168"/>
    </location>
</feature>
<feature type="transmembrane region" description="Helical" evidence="4">
    <location>
        <begin position="3591"/>
        <end position="3611"/>
    </location>
</feature>
<feature type="transmembrane region" description="Helical" evidence="4">
    <location>
        <begin position="3621"/>
        <end position="3641"/>
    </location>
</feature>
<feature type="transmembrane region" description="Helical" evidence="4">
    <location>
        <begin position="3647"/>
        <end position="3667"/>
    </location>
</feature>
<feature type="transmembrane region" description="Helical" evidence="4">
    <location>
        <begin position="3690"/>
        <end position="3710"/>
    </location>
</feature>
<feature type="transmembrane region" description="Helical" evidence="4">
    <location>
        <begin position="3717"/>
        <end position="3737"/>
    </location>
</feature>
<feature type="transmembrane region" description="Helical" evidence="4">
    <location>
        <begin position="3744"/>
        <end position="3764"/>
    </location>
</feature>
<feature type="transmembrane region" description="Helical" evidence="4">
    <location>
        <begin position="3788"/>
        <end position="3808"/>
    </location>
</feature>
<feature type="domain" description="CoV Nsp1 globular" evidence="26">
    <location>
        <begin position="54"/>
        <end position="196"/>
    </location>
</feature>
<feature type="domain" description="BetaCoV Nsp1 C-terminal" evidence="27">
    <location>
        <begin position="217"/>
        <end position="247"/>
    </location>
</feature>
<feature type="domain" description="CoV Nsp2 N-terminal" evidence="28">
    <location>
        <begin position="251"/>
        <end position="511"/>
    </location>
</feature>
<feature type="domain" description="CoV Nsp2 middle" evidence="29">
    <location>
        <begin position="518"/>
        <end position="706"/>
    </location>
</feature>
<feature type="domain" description="CoV Nsp2 C-terminal" evidence="30">
    <location>
        <begin position="726"/>
        <end position="832"/>
    </location>
</feature>
<feature type="domain" description="Ubiquitin-like 1" evidence="5">
    <location>
        <begin position="834"/>
        <end position="946"/>
    </location>
</feature>
<feature type="domain" description="Peptidase C16 1" evidence="6">
    <location>
        <begin position="1031"/>
        <end position="1268"/>
    </location>
</feature>
<feature type="domain" description="Macro" evidence="7">
    <location>
        <begin position="1269"/>
        <end position="1429"/>
    </location>
</feature>
<feature type="domain" description="DPUP" evidence="11">
    <location>
        <begin position="1484"/>
        <end position="1556"/>
    </location>
</feature>
<feature type="domain" description="Ubiquitin-like 2" evidence="5">
    <location>
        <begin position="1555"/>
        <end position="1610"/>
    </location>
</feature>
<feature type="domain" description="Peptidase C16 2" evidence="6">
    <location>
        <begin position="1625"/>
        <end position="1884"/>
    </location>
</feature>
<feature type="domain" description="Nucleic acid-binding" evidence="12">
    <location>
        <begin position="1898"/>
        <end position="1999"/>
    </location>
</feature>
<feature type="domain" description="G2M" evidence="33">
    <location>
        <begin position="2053"/>
        <end position="2202"/>
    </location>
</feature>
<feature type="domain" description="3Ecto" evidence="32">
    <location>
        <begin position="2268"/>
        <end position="2329"/>
    </location>
</feature>
<feature type="domain" description="CoV Nsp3 Y" evidence="31">
    <location>
        <begin position="2416"/>
        <end position="2783"/>
    </location>
</feature>
<feature type="domain" description="Nsp4C" evidence="13">
    <location>
        <begin position="3182"/>
        <end position="3279"/>
    </location>
</feature>
<feature type="domain" description="Peptidase C30" evidence="9">
    <location>
        <begin position="3280"/>
        <end position="3582"/>
    </location>
</feature>
<feature type="domain" description="RdRp Nsp7 cofactor" evidence="16">
    <location>
        <begin position="3870"/>
        <end position="3958"/>
    </location>
</feature>
<feature type="domain" description="RdRp Nsp8 cofactor" evidence="17">
    <location>
        <begin position="3959"/>
        <end position="4155"/>
    </location>
</feature>
<feature type="domain" description="Nsp9 ssRNA-binding" evidence="18">
    <location>
        <begin position="4156"/>
        <end position="4265"/>
    </location>
</feature>
<feature type="domain" description="ExoN/MTase coactivator" evidence="19">
    <location>
        <begin position="4266"/>
        <end position="4403"/>
    </location>
</feature>
<feature type="domain" description="NiRAN" evidence="14">
    <location>
        <begin position="4408"/>
        <end position="4663"/>
    </location>
</feature>
<feature type="domain" description="Nsp12 Interface" evidence="34">
    <location>
        <begin position="4664"/>
        <end position="4762"/>
    </location>
</feature>
<feature type="domain" description="Nsp12 RNA-dependent RNA polymerase" evidence="15">
    <location>
        <begin position="4763"/>
        <end position="5330"/>
    </location>
</feature>
<feature type="domain" description="RdRp catalytic" evidence="8">
    <location>
        <begin position="5010"/>
        <end position="5172"/>
    </location>
</feature>
<feature type="domain" description="CV ZBD" evidence="10">
    <location>
        <begin position="5331"/>
        <end position="5443"/>
    </location>
</feature>
<feature type="domain" description="(+)RNA virus helicase ATP-binding">
    <location>
        <begin position="5586"/>
        <end position="5767"/>
    </location>
</feature>
<feature type="domain" description="(+)RNA virus helicase C-terminal">
    <location>
        <begin position="5768"/>
        <end position="5937"/>
    </location>
</feature>
<feature type="domain" description="ExoN" evidence="20">
    <location>
        <begin position="6001"/>
        <end position="6216"/>
    </location>
</feature>
<feature type="domain" description="N7-MTase" evidence="21">
    <location>
        <begin position="6225"/>
        <end position="6451"/>
    </location>
</feature>
<feature type="domain" description="Nsp15 N-terminal oligomerization" evidence="24">
    <location>
        <begin position="6452"/>
        <end position="6512"/>
    </location>
</feature>
<feature type="domain" description="AV-Nsp11N/CoV-Nsp15M" evidence="25">
    <location>
        <begin position="6513"/>
        <end position="6633"/>
    </location>
</feature>
<feature type="domain" description="NendoU" evidence="23">
    <location>
        <begin position="6683"/>
        <end position="6822"/>
    </location>
</feature>
<feature type="domain" description="Nidovirus-type SAM-dependent 2'-O-MTase" evidence="22">
    <location>
        <begin position="6827"/>
        <end position="7121"/>
    </location>
</feature>
<feature type="zinc finger region" description="C4-type 1" evidence="6">
    <location>
        <begin position="1145"/>
        <end position="1173"/>
    </location>
</feature>
<feature type="zinc finger region" description="C4-type 2" evidence="6">
    <location>
        <begin position="1741"/>
        <end position="1777"/>
    </location>
</feature>
<feature type="zinc finger region" evidence="1">
    <location>
        <begin position="4339"/>
        <end position="4355"/>
    </location>
</feature>
<feature type="zinc finger region" evidence="1">
    <location>
        <begin position="4381"/>
        <end position="4394"/>
    </location>
</feature>
<feature type="region of interest" description="Disordered" evidence="35">
    <location>
        <begin position="25"/>
        <end position="45"/>
    </location>
</feature>
<feature type="region of interest" description="C4" evidence="28">
    <location>
        <begin position="390"/>
        <end position="414"/>
    </location>
</feature>
<feature type="region of interest" description="HD1">
    <location>
        <begin position="2232"/>
        <end position="2408"/>
    </location>
</feature>
<feature type="region of interest" description="Y1" evidence="31">
    <location>
        <begin position="2416"/>
        <end position="2506"/>
    </location>
</feature>
<feature type="region of interest" description="ZF1" evidence="31">
    <location>
        <begin position="2420"/>
        <end position="2433"/>
    </location>
</feature>
<feature type="region of interest" description="ZF2" evidence="31">
    <location>
        <begin position="2466"/>
        <end position="2476"/>
    </location>
</feature>
<feature type="region of interest" description="CoV-Y" evidence="31">
    <location>
        <begin position="2507"/>
        <end position="2783"/>
    </location>
</feature>
<feature type="region of interest" description="Y2" evidence="31">
    <location>
        <begin position="2507"/>
        <end position="2599"/>
    </location>
</feature>
<feature type="region of interest" description="Y3" evidence="31">
    <location>
        <begin position="2600"/>
        <end position="2682"/>
    </location>
</feature>
<feature type="region of interest" description="Y4" evidence="31">
    <location>
        <begin position="2683"/>
        <end position="2783"/>
    </location>
</feature>
<feature type="region of interest" description="HD2">
    <location>
        <begin position="2789"/>
        <end position="3168"/>
    </location>
</feature>
<feature type="region of interest" description="HD3">
    <location>
        <begin position="3525"/>
        <end position="3808"/>
    </location>
</feature>
<feature type="region of interest" description="RdRp Fingers N-ter" evidence="15">
    <location>
        <begin position="4765"/>
        <end position="4979"/>
    </location>
</feature>
<feature type="region of interest" description="RdRp Palm N-ter" evidence="15">
    <location>
        <begin position="4980"/>
        <end position="5018"/>
    </location>
</feature>
<feature type="region of interest" description="RdRp Fingers C-ter" evidence="15">
    <location>
        <begin position="5019"/>
        <end position="5077"/>
    </location>
</feature>
<feature type="region of interest" description="RdRp Palm C-ter" evidence="15">
    <location>
        <begin position="5078"/>
        <end position="5213"/>
    </location>
</feature>
<feature type="region of interest" description="RdRp Thumb" evidence="15">
    <location>
        <begin position="5214"/>
        <end position="5330"/>
    </location>
</feature>
<feature type="region of interest" description="GpppA-binding" evidence="21">
    <location>
        <begin position="6338"/>
        <end position="6352"/>
    </location>
</feature>
<feature type="active site" description="For PL1-PRO activity" evidence="6">
    <location>
        <position position="1068"/>
    </location>
</feature>
<feature type="active site" description="For PL1-PRO activity" evidence="6">
    <location>
        <position position="1219"/>
    </location>
</feature>
<feature type="active site" description="For PL1-PRO activity" evidence="6">
    <location>
        <position position="1230"/>
    </location>
</feature>
<feature type="active site" description="For PL2-PRO activity" evidence="6">
    <location>
        <position position="1663"/>
    </location>
</feature>
<feature type="active site" description="For PL2-PRO activity" evidence="6">
    <location>
        <position position="1820"/>
    </location>
</feature>
<feature type="active site" description="For PL2-PRO activity" evidence="6">
    <location>
        <position position="1834"/>
    </location>
</feature>
<feature type="active site" description="For 3CL-PRO activity" evidence="9">
    <location>
        <position position="3320"/>
    </location>
</feature>
<feature type="active site" description="For 3CL-PRO activity" evidence="9">
    <location>
        <position position="3424"/>
    </location>
</feature>
<feature type="active site" evidence="15">
    <location>
        <position position="5157"/>
    </location>
</feature>
<feature type="active site" evidence="15">
    <location>
        <position position="5158"/>
    </location>
</feature>
<feature type="active site" evidence="15">
    <location>
        <position position="5159"/>
    </location>
</feature>
<feature type="active site" evidence="20">
    <location>
        <position position="6019"/>
    </location>
</feature>
<feature type="active site" evidence="20">
    <location>
        <position position="6021"/>
    </location>
</feature>
<feature type="active site" evidence="20">
    <location>
        <position position="6120"/>
    </location>
</feature>
<feature type="active site" evidence="20">
    <location>
        <position position="6197"/>
    </location>
</feature>
<feature type="active site" evidence="20">
    <location>
        <position position="6202"/>
    </location>
</feature>
<feature type="active site" evidence="23">
    <location>
        <position position="6713"/>
    </location>
</feature>
<feature type="active site" evidence="23">
    <location>
        <position position="6728"/>
    </location>
</feature>
<feature type="active site" evidence="23">
    <location>
        <position position="6768"/>
    </location>
</feature>
<feature type="active site" evidence="22">
    <location>
        <position position="6871"/>
    </location>
</feature>
<feature type="active site" evidence="22">
    <location>
        <position position="6955"/>
    </location>
</feature>
<feature type="active site" evidence="22">
    <location>
        <position position="6995"/>
    </location>
</feature>
<feature type="active site" evidence="22">
    <location>
        <position position="7028"/>
    </location>
</feature>
<feature type="binding site" evidence="28">
    <location>
        <position position="390"/>
    </location>
    <ligand>
        <name>Zn(2+)</name>
        <dbReference type="ChEBI" id="CHEBI:29105"/>
        <label>1</label>
    </ligand>
</feature>
<feature type="binding site" evidence="28">
    <location>
        <position position="395"/>
    </location>
    <ligand>
        <name>Zn(2+)</name>
        <dbReference type="ChEBI" id="CHEBI:29105"/>
        <label>1</label>
    </ligand>
</feature>
<feature type="binding site" evidence="28">
    <location>
        <position position="411"/>
    </location>
    <ligand>
        <name>Zn(2+)</name>
        <dbReference type="ChEBI" id="CHEBI:29105"/>
        <label>1</label>
    </ligand>
</feature>
<feature type="binding site" evidence="28">
    <location>
        <position position="414"/>
    </location>
    <ligand>
        <name>Zn(2+)</name>
        <dbReference type="ChEBI" id="CHEBI:29105"/>
        <label>1</label>
    </ligand>
</feature>
<feature type="binding site" evidence="6">
    <location>
        <position position="1145"/>
    </location>
    <ligand>
        <name>Zn(2+)</name>
        <dbReference type="ChEBI" id="CHEBI:29105"/>
        <label>2</label>
    </ligand>
</feature>
<feature type="binding site" evidence="6">
    <location>
        <position position="1148"/>
    </location>
    <ligand>
        <name>Zn(2+)</name>
        <dbReference type="ChEBI" id="CHEBI:29105"/>
        <label>2</label>
    </ligand>
</feature>
<feature type="binding site" evidence="6">
    <location>
        <position position="1171"/>
    </location>
    <ligand>
        <name>Zn(2+)</name>
        <dbReference type="ChEBI" id="CHEBI:29105"/>
        <label>2</label>
    </ligand>
</feature>
<feature type="binding site" evidence="6">
    <location>
        <position position="1173"/>
    </location>
    <ligand>
        <name>Zn(2+)</name>
        <dbReference type="ChEBI" id="CHEBI:29105"/>
        <label>2</label>
    </ligand>
</feature>
<feature type="binding site" evidence="6">
    <location>
        <position position="1741"/>
    </location>
    <ligand>
        <name>Zn(2+)</name>
        <dbReference type="ChEBI" id="CHEBI:29105"/>
        <label>3</label>
    </ligand>
</feature>
<feature type="binding site" evidence="6">
    <location>
        <position position="1743"/>
    </location>
    <ligand>
        <name>Zn(2+)</name>
        <dbReference type="ChEBI" id="CHEBI:29105"/>
        <label>3</label>
    </ligand>
</feature>
<feature type="binding site" evidence="6">
    <location>
        <position position="1775"/>
    </location>
    <ligand>
        <name>Zn(2+)</name>
        <dbReference type="ChEBI" id="CHEBI:29105"/>
        <label>3</label>
    </ligand>
</feature>
<feature type="binding site" evidence="6">
    <location>
        <position position="1777"/>
    </location>
    <ligand>
        <name>Zn(2+)</name>
        <dbReference type="ChEBI" id="CHEBI:29105"/>
        <label>3</label>
    </ligand>
</feature>
<feature type="binding site" evidence="31">
    <location>
        <position position="2420"/>
    </location>
    <ligand>
        <name>Zn(2+)</name>
        <dbReference type="ChEBI" id="CHEBI:29105"/>
        <label>4</label>
    </ligand>
</feature>
<feature type="binding site" evidence="31">
    <location>
        <position position="2425"/>
    </location>
    <ligand>
        <name>Zn(2+)</name>
        <dbReference type="ChEBI" id="CHEBI:29105"/>
        <label>4</label>
    </ligand>
</feature>
<feature type="binding site" evidence="31">
    <location>
        <position position="2430"/>
    </location>
    <ligand>
        <name>Zn(2+)</name>
        <dbReference type="ChEBI" id="CHEBI:29105"/>
        <label>4</label>
    </ligand>
</feature>
<feature type="binding site" evidence="31">
    <location>
        <position position="2433"/>
    </location>
    <ligand>
        <name>Zn(2+)</name>
        <dbReference type="ChEBI" id="CHEBI:29105"/>
        <label>4</label>
    </ligand>
</feature>
<feature type="binding site" evidence="31">
    <location>
        <position position="2466"/>
    </location>
    <ligand>
        <name>Zn(2+)</name>
        <dbReference type="ChEBI" id="CHEBI:29105"/>
        <label>5</label>
    </ligand>
</feature>
<feature type="binding site" evidence="31">
    <location>
        <position position="2469"/>
    </location>
    <ligand>
        <name>Zn(2+)</name>
        <dbReference type="ChEBI" id="CHEBI:29105"/>
        <label>5</label>
    </ligand>
</feature>
<feature type="binding site" evidence="31">
    <location>
        <position position="2473"/>
    </location>
    <ligand>
        <name>Zn(2+)</name>
        <dbReference type="ChEBI" id="CHEBI:29105"/>
        <label>5</label>
    </ligand>
</feature>
<feature type="binding site" evidence="31">
    <location>
        <position position="2476"/>
    </location>
    <ligand>
        <name>Zn(2+)</name>
        <dbReference type="ChEBI" id="CHEBI:29105"/>
        <label>5</label>
    </ligand>
</feature>
<feature type="binding site" evidence="19">
    <location>
        <position position="4339"/>
    </location>
    <ligand>
        <name>Zn(2+)</name>
        <dbReference type="ChEBI" id="CHEBI:29105"/>
        <label>6</label>
    </ligand>
</feature>
<feature type="binding site" evidence="19">
    <location>
        <position position="4342"/>
    </location>
    <ligand>
        <name>Zn(2+)</name>
        <dbReference type="ChEBI" id="CHEBI:29105"/>
        <label>6</label>
    </ligand>
</feature>
<feature type="binding site" evidence="19">
    <location>
        <position position="4348"/>
    </location>
    <ligand>
        <name>Zn(2+)</name>
        <dbReference type="ChEBI" id="CHEBI:29105"/>
        <label>6</label>
    </ligand>
</feature>
<feature type="binding site" evidence="19">
    <location>
        <position position="4355"/>
    </location>
    <ligand>
        <name>Zn(2+)</name>
        <dbReference type="ChEBI" id="CHEBI:29105"/>
        <label>6</label>
    </ligand>
</feature>
<feature type="binding site" evidence="19">
    <location>
        <position position="4381"/>
    </location>
    <ligand>
        <name>Zn(2+)</name>
        <dbReference type="ChEBI" id="CHEBI:29105"/>
        <label>7</label>
    </ligand>
</feature>
<feature type="binding site" evidence="19">
    <location>
        <position position="4384"/>
    </location>
    <ligand>
        <name>Zn(2+)</name>
        <dbReference type="ChEBI" id="CHEBI:29105"/>
        <label>7</label>
    </ligand>
</feature>
<feature type="binding site" evidence="19">
    <location>
        <position position="4392"/>
    </location>
    <ligand>
        <name>Zn(2+)</name>
        <dbReference type="ChEBI" id="CHEBI:29105"/>
        <label>7</label>
    </ligand>
</feature>
<feature type="binding site" evidence="19">
    <location>
        <position position="4394"/>
    </location>
    <ligand>
        <name>Zn(2+)</name>
        <dbReference type="ChEBI" id="CHEBI:29105"/>
        <label>7</label>
    </ligand>
</feature>
<feature type="binding site" evidence="3">
    <location>
        <position position="4611"/>
    </location>
    <ligand>
        <name>Mn(2+)</name>
        <dbReference type="ChEBI" id="CHEBI:29035"/>
    </ligand>
</feature>
<feature type="binding site" evidence="3">
    <location>
        <position position="4620"/>
    </location>
    <ligand>
        <name>Mn(2+)</name>
        <dbReference type="ChEBI" id="CHEBI:29035"/>
    </ligand>
</feature>
<feature type="binding site" evidence="34">
    <location>
        <position position="4693"/>
    </location>
    <ligand>
        <name>Zn(2+)</name>
        <dbReference type="ChEBI" id="CHEBI:29105"/>
        <label>8</label>
    </ligand>
</feature>
<feature type="binding site" evidence="34">
    <location>
        <position position="4699"/>
    </location>
    <ligand>
        <name>Zn(2+)</name>
        <dbReference type="ChEBI" id="CHEBI:29105"/>
        <label>8</label>
    </ligand>
</feature>
<feature type="binding site" evidence="34">
    <location>
        <position position="4704"/>
    </location>
    <ligand>
        <name>Zn(2+)</name>
        <dbReference type="ChEBI" id="CHEBI:29105"/>
        <label>8</label>
    </ligand>
</feature>
<feature type="binding site" evidence="34">
    <location>
        <position position="4708"/>
    </location>
    <ligand>
        <name>Zn(2+)</name>
        <dbReference type="ChEBI" id="CHEBI:29105"/>
        <label>8</label>
    </ligand>
</feature>
<feature type="binding site" evidence="15">
    <location>
        <position position="4885"/>
    </location>
    <ligand>
        <name>Zn(2+)</name>
        <dbReference type="ChEBI" id="CHEBI:29105"/>
        <label>9</label>
    </ligand>
</feature>
<feature type="binding site" evidence="15">
    <location>
        <position position="5040"/>
    </location>
    <ligand>
        <name>Zn(2+)</name>
        <dbReference type="ChEBI" id="CHEBI:29105"/>
        <label>9</label>
    </ligand>
</feature>
<feature type="binding site" evidence="15">
    <location>
        <position position="5043"/>
    </location>
    <ligand>
        <name>Zn(2+)</name>
        <dbReference type="ChEBI" id="CHEBI:29105"/>
        <label>9</label>
    </ligand>
</feature>
<feature type="binding site" evidence="15">
    <location>
        <position position="5044"/>
    </location>
    <ligand>
        <name>Zn(2+)</name>
        <dbReference type="ChEBI" id="CHEBI:29105"/>
        <label>9</label>
    </ligand>
</feature>
<feature type="binding site" evidence="10">
    <location>
        <position position="5335"/>
    </location>
    <ligand>
        <name>Zn(2+)</name>
        <dbReference type="ChEBI" id="CHEBI:29105"/>
        <label>10</label>
    </ligand>
</feature>
<feature type="binding site" evidence="10">
    <location>
        <position position="5338"/>
    </location>
    <ligand>
        <name>Zn(2+)</name>
        <dbReference type="ChEBI" id="CHEBI:29105"/>
        <label>10</label>
    </ligand>
</feature>
<feature type="binding site" evidence="10">
    <location>
        <position position="5346"/>
    </location>
    <ligand>
        <name>Zn(2+)</name>
        <dbReference type="ChEBI" id="CHEBI:29105"/>
        <label>11</label>
    </ligand>
</feature>
<feature type="binding site" evidence="10">
    <location>
        <position position="5349"/>
    </location>
    <ligand>
        <name>Zn(2+)</name>
        <dbReference type="ChEBI" id="CHEBI:29105"/>
        <label>11</label>
    </ligand>
</feature>
<feature type="binding site" evidence="10">
    <location>
        <position position="5356"/>
    </location>
    <ligand>
        <name>Zn(2+)</name>
        <dbReference type="ChEBI" id="CHEBI:29105"/>
        <label>10</label>
    </ligand>
</feature>
<feature type="binding site" evidence="10">
    <location>
        <position position="5359"/>
    </location>
    <ligand>
        <name>Zn(2+)</name>
        <dbReference type="ChEBI" id="CHEBI:29105"/>
        <label>10</label>
    </ligand>
</feature>
<feature type="binding site" evidence="10">
    <location>
        <position position="5363"/>
    </location>
    <ligand>
        <name>Zn(2+)</name>
        <dbReference type="ChEBI" id="CHEBI:29105"/>
        <label>11</label>
    </ligand>
</feature>
<feature type="binding site" evidence="10">
    <location>
        <position position="5369"/>
    </location>
    <ligand>
        <name>Zn(2+)</name>
        <dbReference type="ChEBI" id="CHEBI:29105"/>
        <label>11</label>
    </ligand>
</feature>
<feature type="binding site" evidence="10">
    <location>
        <position position="5380"/>
    </location>
    <ligand>
        <name>Zn(2+)</name>
        <dbReference type="ChEBI" id="CHEBI:29105"/>
        <label>12</label>
    </ligand>
</feature>
<feature type="binding site" evidence="10">
    <location>
        <position position="5385"/>
    </location>
    <ligand>
        <name>Zn(2+)</name>
        <dbReference type="ChEBI" id="CHEBI:29105"/>
        <label>12</label>
    </ligand>
</feature>
<feature type="binding site" evidence="10">
    <location>
        <position position="5402"/>
    </location>
    <ligand>
        <name>Zn(2+)</name>
        <dbReference type="ChEBI" id="CHEBI:29105"/>
        <label>12</label>
    </ligand>
</feature>
<feature type="binding site" evidence="10">
    <location>
        <position position="5405"/>
    </location>
    <ligand>
        <name>Zn(2+)</name>
        <dbReference type="ChEBI" id="CHEBI:29105"/>
        <label>12</label>
    </ligand>
</feature>
<feature type="binding site" evidence="1">
    <location>
        <begin position="5611"/>
        <end position="5618"/>
    </location>
    <ligand>
        <name>ATP</name>
        <dbReference type="ChEBI" id="CHEBI:30616"/>
    </ligand>
</feature>
<feature type="binding site" evidence="20">
    <location>
        <position position="6136"/>
    </location>
    <ligand>
        <name>Zn(2+)</name>
        <dbReference type="ChEBI" id="CHEBI:29105"/>
        <label>13</label>
    </ligand>
</feature>
<feature type="binding site" evidence="20">
    <location>
        <position position="6139"/>
    </location>
    <ligand>
        <name>Zn(2+)</name>
        <dbReference type="ChEBI" id="CHEBI:29105"/>
        <label>13</label>
    </ligand>
</feature>
<feature type="binding site" evidence="20">
    <location>
        <position position="6155"/>
    </location>
    <ligand>
        <name>Zn(2+)</name>
        <dbReference type="ChEBI" id="CHEBI:29105"/>
        <label>13</label>
    </ligand>
</feature>
<feature type="binding site" evidence="20">
    <location>
        <position position="6158"/>
    </location>
    <ligand>
        <name>Zn(2+)</name>
        <dbReference type="ChEBI" id="CHEBI:29105"/>
        <label>13</label>
    </ligand>
</feature>
<feature type="binding site" evidence="20">
    <location>
        <position position="6186"/>
    </location>
    <ligand>
        <name>Zn(2+)</name>
        <dbReference type="ChEBI" id="CHEBI:29105"/>
        <label>14</label>
    </ligand>
</feature>
<feature type="binding site" evidence="20">
    <location>
        <position position="6190"/>
    </location>
    <ligand>
        <name>Zn(2+)</name>
        <dbReference type="ChEBI" id="CHEBI:29105"/>
        <label>14</label>
    </ligand>
</feature>
<feature type="binding site" evidence="20">
    <location>
        <position position="6193"/>
    </location>
    <ligand>
        <name>Zn(2+)</name>
        <dbReference type="ChEBI" id="CHEBI:29105"/>
        <label>14</label>
    </ligand>
</feature>
<feature type="binding site" evidence="20">
    <location>
        <position position="6208"/>
    </location>
    <ligand>
        <name>Zn(2+)</name>
        <dbReference type="ChEBI" id="CHEBI:29105"/>
        <label>14</label>
    </ligand>
</feature>
<feature type="binding site" evidence="21">
    <location>
        <begin position="6260"/>
        <end position="6266"/>
    </location>
    <ligand>
        <name>S-adenosyl-L-methionine</name>
        <dbReference type="ChEBI" id="CHEBI:59789"/>
    </ligand>
</feature>
<feature type="binding site" evidence="21">
    <location>
        <position position="6376"/>
    </location>
    <ligand>
        <name>Zn(2+)</name>
        <dbReference type="ChEBI" id="CHEBI:29105"/>
        <label>15</label>
    </ligand>
</feature>
<feature type="binding site" evidence="21">
    <location>
        <position position="6397"/>
    </location>
    <ligand>
        <name>Zn(2+)</name>
        <dbReference type="ChEBI" id="CHEBI:29105"/>
        <label>15</label>
    </ligand>
</feature>
<feature type="binding site" evidence="21">
    <location>
        <position position="6408"/>
    </location>
    <ligand>
        <name>Zn(2+)</name>
        <dbReference type="ChEBI" id="CHEBI:29105"/>
        <label>15</label>
    </ligand>
</feature>
<feature type="binding site" evidence="21">
    <location>
        <position position="6411"/>
    </location>
    <ligand>
        <name>Zn(2+)</name>
        <dbReference type="ChEBI" id="CHEBI:29105"/>
        <label>15</label>
    </ligand>
</feature>
<feature type="site" description="Cleavage; by PL1-PRO" evidence="1">
    <location>
        <begin position="247"/>
        <end position="248"/>
    </location>
</feature>
<feature type="site" description="Cleavage; by PL1-PRO" evidence="1">
    <location>
        <begin position="832"/>
        <end position="833"/>
    </location>
</feature>
<feature type="site" description="Cleavage; by PL2-PRO" evidence="1">
    <location>
        <begin position="2783"/>
        <end position="2784"/>
    </location>
</feature>
<feature type="site" description="Cleavage; by 3CL-PRO" evidence="1">
    <location>
        <begin position="3279"/>
        <end position="3280"/>
    </location>
</feature>
<feature type="site" description="Cleavage; by 3CL-PRO" evidence="1">
    <location>
        <begin position="3582"/>
        <end position="3583"/>
    </location>
</feature>
<feature type="site" description="Cleavage; by 3CL-PRO" evidence="1">
    <location>
        <begin position="3869"/>
        <end position="3870"/>
    </location>
</feature>
<feature type="site" description="Cleavage; by 3CL-PRO" evidence="1">
    <location>
        <begin position="3961"/>
        <end position="3962"/>
    </location>
</feature>
<feature type="site" description="Cleavage; by 3CL-PRO" evidence="1">
    <location>
        <begin position="4155"/>
        <end position="4156"/>
    </location>
</feature>
<feature type="site" description="Cleavage; by 3CL-PRO" evidence="1">
    <location>
        <begin position="4265"/>
        <end position="4266"/>
    </location>
</feature>
<feature type="site" description="Cleavage; by 3CL-PRO" evidence="1">
    <location>
        <begin position="4402"/>
        <end position="4403"/>
    </location>
</feature>
<feature type="site" description="Cleavage; by 3CL-PRO" evidence="1">
    <location>
        <begin position="5330"/>
        <end position="5331"/>
    </location>
</feature>
<feature type="site" description="Cleavage; by 3CL-PRO" evidence="1">
    <location>
        <begin position="5930"/>
        <end position="5931"/>
    </location>
</feature>
<feature type="site" description="Cleavage; by 3CL-PRO" evidence="1">
    <location>
        <begin position="6451"/>
        <end position="6452"/>
    </location>
</feature>
<feature type="site" description="Cleavage; by 3CL-PRO" evidence="1">
    <location>
        <begin position="6825"/>
        <end position="6826"/>
    </location>
</feature>
<feature type="disulfide bond" evidence="32">
    <location>
        <begin position="2284"/>
        <end position="2308"/>
    </location>
</feature>
<feature type="disulfide bond" evidence="32">
    <location>
        <begin position="2299"/>
        <end position="2305"/>
    </location>
</feature>
<organismHost>
    <name type="scientific">Mus musculus</name>
    <name type="common">Mouse</name>
    <dbReference type="NCBI Taxonomy" id="10090"/>
</organismHost>
<keyword id="KW-1072">Activation of host autophagy by virus</keyword>
<keyword id="KW-0067">ATP-binding</keyword>
<keyword id="KW-1132">Decay of host mRNAs by virus</keyword>
<keyword id="KW-1015">Disulfide bond</keyword>
<keyword id="KW-0255">Endonuclease</keyword>
<keyword id="KW-1262">Eukaryotic host gene expression shutoff by virus</keyword>
<keyword id="KW-1193">Eukaryotic host translation shutoff by virus</keyword>
<keyword id="KW-0269">Exonuclease</keyword>
<keyword id="KW-0347">Helicase</keyword>
<keyword id="KW-1035">Host cytoplasm</keyword>
<keyword id="KW-1190">Host gene expression shutoff by virus</keyword>
<keyword id="KW-1043">Host membrane</keyword>
<keyword id="KW-1192">Host mRNA suppression by virus</keyword>
<keyword id="KW-0945">Host-virus interaction</keyword>
<keyword id="KW-0378">Hydrolase</keyword>
<keyword id="KW-1090">Inhibition of host innate immune response by virus</keyword>
<keyword id="KW-1114">Inhibition of host interferon signaling pathway by virus</keyword>
<keyword id="KW-1095">Inhibition of host ISG15 by virus</keyword>
<keyword id="KW-1100">Inhibition of host NF-kappa-B by virus</keyword>
<keyword id="KW-0922">Interferon antiviral system evasion</keyword>
<keyword id="KW-0456">Lyase</keyword>
<keyword id="KW-0464">Manganese</keyword>
<keyword id="KW-0472">Membrane</keyword>
<keyword id="KW-0479">Metal-binding</keyword>
<keyword id="KW-0489">Methyltransferase</keyword>
<keyword id="KW-1127">Modulation of host ubiquitin pathway by viral deubiquitinase</keyword>
<keyword id="KW-1130">Modulation of host ubiquitin pathway by virus</keyword>
<keyword id="KW-0540">Nuclease</keyword>
<keyword id="KW-0547">Nucleotide-binding</keyword>
<keyword id="KW-0548">Nucleotidyltransferase</keyword>
<keyword id="KW-0645">Protease</keyword>
<keyword id="KW-1185">Reference proteome</keyword>
<keyword id="KW-0677">Repeat</keyword>
<keyword id="KW-0688">Ribosomal frameshifting</keyword>
<keyword id="KW-0694">RNA-binding</keyword>
<keyword id="KW-0696">RNA-directed RNA polymerase</keyword>
<keyword id="KW-0788">Thiol protease</keyword>
<keyword id="KW-0808">Transferase</keyword>
<keyword id="KW-0812">Transmembrane</keyword>
<keyword id="KW-1133">Transmembrane helix</keyword>
<keyword id="KW-0833">Ubl conjugation pathway</keyword>
<keyword id="KW-0899">Viral immunoevasion</keyword>
<keyword id="KW-0693">Viral RNA replication</keyword>
<keyword id="KW-0862">Zinc</keyword>
<keyword id="KW-0863">Zinc-finger</keyword>